<gene>
    <name evidence="35" type="primary">H2BC11</name>
    <name evidence="35" type="synonym">H2BFR</name>
    <name evidence="35" type="synonym">HIST1H2BJ</name>
</gene>
<proteinExistence type="evidence at protein level"/>
<evidence type="ECO:0000250" key="1">
    <source>
        <dbReference type="UniProtKB" id="P23527"/>
    </source>
</evidence>
<evidence type="ECO:0000250" key="2">
    <source>
        <dbReference type="UniProtKB" id="P33778"/>
    </source>
</evidence>
<evidence type="ECO:0000250" key="3">
    <source>
        <dbReference type="UniProtKB" id="P58876"/>
    </source>
</evidence>
<evidence type="ECO:0000250" key="4">
    <source>
        <dbReference type="UniProtKB" id="P62807"/>
    </source>
</evidence>
<evidence type="ECO:0000250" key="5">
    <source>
        <dbReference type="UniProtKB" id="Q00729"/>
    </source>
</evidence>
<evidence type="ECO:0000250" key="6">
    <source>
        <dbReference type="UniProtKB" id="Q5QNW6"/>
    </source>
</evidence>
<evidence type="ECO:0000250" key="7">
    <source>
        <dbReference type="UniProtKB" id="Q64475"/>
    </source>
</evidence>
<evidence type="ECO:0000250" key="8">
    <source>
        <dbReference type="UniProtKB" id="Q6ZWY9"/>
    </source>
</evidence>
<evidence type="ECO:0000250" key="9">
    <source>
        <dbReference type="UniProtKB" id="Q96A08"/>
    </source>
</evidence>
<evidence type="ECO:0000256" key="10">
    <source>
        <dbReference type="SAM" id="MobiDB-lite"/>
    </source>
</evidence>
<evidence type="ECO:0000269" key="11">
    <source>
    </source>
</evidence>
<evidence type="ECO:0000269" key="12">
    <source>
    </source>
</evidence>
<evidence type="ECO:0000269" key="13">
    <source>
    </source>
</evidence>
<evidence type="ECO:0000269" key="14">
    <source>
    </source>
</evidence>
<evidence type="ECO:0000269" key="15">
    <source>
    </source>
</evidence>
<evidence type="ECO:0000269" key="16">
    <source>
    </source>
</evidence>
<evidence type="ECO:0000269" key="17">
    <source>
    </source>
</evidence>
<evidence type="ECO:0000269" key="18">
    <source>
    </source>
</evidence>
<evidence type="ECO:0000269" key="19">
    <source>
    </source>
</evidence>
<evidence type="ECO:0000269" key="20">
    <source>
    </source>
</evidence>
<evidence type="ECO:0000269" key="21">
    <source>
    </source>
</evidence>
<evidence type="ECO:0000269" key="22">
    <source>
    </source>
</evidence>
<evidence type="ECO:0000269" key="23">
    <source>
    </source>
</evidence>
<evidence type="ECO:0000269" key="24">
    <source>
    </source>
</evidence>
<evidence type="ECO:0000269" key="25">
    <source>
    </source>
</evidence>
<evidence type="ECO:0000269" key="26">
    <source>
    </source>
</evidence>
<evidence type="ECO:0000269" key="27">
    <source>
    </source>
</evidence>
<evidence type="ECO:0000269" key="28">
    <source>
    </source>
</evidence>
<evidence type="ECO:0000269" key="29">
    <source>
    </source>
</evidence>
<evidence type="ECO:0000269" key="30">
    <source>
    </source>
</evidence>
<evidence type="ECO:0000269" key="31">
    <source>
    </source>
</evidence>
<evidence type="ECO:0000269" key="32">
    <source>
    </source>
</evidence>
<evidence type="ECO:0000269" key="33">
    <source>
    </source>
</evidence>
<evidence type="ECO:0000305" key="34"/>
<evidence type="ECO:0000312" key="35">
    <source>
        <dbReference type="HGNC" id="HGNC:4761"/>
    </source>
</evidence>
<evidence type="ECO:0007744" key="36">
    <source>
        <dbReference type="PDB" id="5AY8"/>
    </source>
</evidence>
<evidence type="ECO:0007744" key="37">
    <source>
        <dbReference type="PDB" id="6USJ"/>
    </source>
</evidence>
<evidence type="ECO:0007744" key="38">
    <source>
        <dbReference type="PDB" id="7C0M"/>
    </source>
</evidence>
<evidence type="ECO:0007744" key="39">
    <source>
        <dbReference type="PDB" id="7CCQ"/>
    </source>
</evidence>
<evidence type="ECO:0007744" key="40">
    <source>
        <dbReference type="PDB" id="7CCR"/>
    </source>
</evidence>
<evidence type="ECO:0007829" key="41">
    <source>
        <dbReference type="PDB" id="4CAY"/>
    </source>
</evidence>
<evidence type="ECO:0007829" key="42">
    <source>
        <dbReference type="PDB" id="5B33"/>
    </source>
</evidence>
<evidence type="ECO:0007829" key="43">
    <source>
        <dbReference type="PDB" id="7D1Z"/>
    </source>
</evidence>
<evidence type="ECO:0007829" key="44">
    <source>
        <dbReference type="PDB" id="7VZ4"/>
    </source>
</evidence>
<accession>P06899</accession>
<accession>B2R4J4</accession>
<accession>O60816</accession>
<protein>
    <recommendedName>
        <fullName>Histone H2B type 1-J</fullName>
    </recommendedName>
    <alternativeName>
        <fullName>Histone H2B.1</fullName>
    </alternativeName>
    <alternativeName>
        <fullName>Histone H2B.r</fullName>
        <shortName>H2B/r</shortName>
    </alternativeName>
</protein>
<feature type="initiator methionine" description="Removed" evidence="1 12 14 15 29 33">
    <location>
        <position position="1"/>
    </location>
</feature>
<feature type="chain" id="PRO_0000071836" description="Histone H2B type 1-J">
    <location>
        <begin position="2"/>
        <end position="126"/>
    </location>
</feature>
<feature type="region of interest" description="Disordered" evidence="10">
    <location>
        <begin position="1"/>
        <end position="35"/>
    </location>
</feature>
<feature type="compositionally biased region" description="Low complexity" evidence="10">
    <location>
        <begin position="1"/>
        <end position="12"/>
    </location>
</feature>
<feature type="modified residue" description="N-acetylproline" evidence="1">
    <location>
        <position position="2"/>
    </location>
</feature>
<feature type="modified residue" description="ADP-ribosyl glutamic acid" evidence="28">
    <location>
        <position position="3"/>
    </location>
</feature>
<feature type="modified residue" description="N6-(2-hydroxyisobutyryl)lysine; alternate" evidence="24">
    <location>
        <position position="6"/>
    </location>
</feature>
<feature type="modified residue" description="N6-(beta-hydroxybutyryl)lysine; alternate" evidence="27">
    <location>
        <position position="6"/>
    </location>
</feature>
<feature type="modified residue" description="N6-acetyllysine; alternate" evidence="16 18">
    <location>
        <position position="6"/>
    </location>
</feature>
<feature type="modified residue" description="N6-butyryllysine; alternate" evidence="26">
    <location>
        <position position="6"/>
    </location>
</feature>
<feature type="modified residue" description="N6-crotonyllysine; alternate" evidence="21">
    <location>
        <position position="6"/>
    </location>
</feature>
<feature type="modified residue" description="N6-lactoyllysine; alternate" evidence="31">
    <location>
        <position position="6"/>
    </location>
</feature>
<feature type="modified residue" description="ADP-ribosylserine" evidence="32">
    <location>
        <position position="7"/>
    </location>
</feature>
<feature type="modified residue" description="N6-(beta-hydroxybutyryl)lysine; alternate" evidence="27">
    <location>
        <position position="12"/>
    </location>
</feature>
<feature type="modified residue" description="N6-acetyllysine; alternate" evidence="18">
    <location>
        <position position="12"/>
    </location>
</feature>
<feature type="modified residue" description="N6-crotonyllysine; alternate" evidence="21">
    <location>
        <position position="12"/>
    </location>
</feature>
<feature type="modified residue" description="N6-lactoyllysine; alternate" evidence="31">
    <location>
        <position position="12"/>
    </location>
</feature>
<feature type="modified residue" description="N6-(2-hydroxyisobutyryl)lysine; alternate" evidence="24">
    <location>
        <position position="13"/>
    </location>
</feature>
<feature type="modified residue" description="N6-acetyllysine; alternate" evidence="16 18">
    <location>
        <position position="13"/>
    </location>
</feature>
<feature type="modified residue" description="N6-crotonyllysine; alternate" evidence="21">
    <location>
        <position position="13"/>
    </location>
</feature>
<feature type="modified residue" description="Phosphoserine; by STK4/MST1" evidence="13">
    <location>
        <position position="15"/>
    </location>
</feature>
<feature type="modified residue" description="N6-acetyllysine; alternate" evidence="16 18">
    <location>
        <position position="16"/>
    </location>
</feature>
<feature type="modified residue" description="N6-crotonyllysine; alternate" evidence="21">
    <location>
        <position position="16"/>
    </location>
</feature>
<feature type="modified residue" description="N6-lactoyllysine; alternate" evidence="31">
    <location>
        <position position="16"/>
    </location>
</feature>
<feature type="modified residue" description="N6-(beta-hydroxybutyryl)lysine; alternate" evidence="27">
    <location>
        <position position="17"/>
    </location>
</feature>
<feature type="modified residue" description="N6-acetyllysine; alternate" evidence="18">
    <location>
        <position position="17"/>
    </location>
</feature>
<feature type="modified residue" description="N6-crotonyllysine; alternate" evidence="21">
    <location>
        <position position="17"/>
    </location>
</feature>
<feature type="modified residue" description="N6-glutaryllysine; alternate" evidence="30">
    <location>
        <position position="17"/>
    </location>
</feature>
<feature type="modified residue" description="N6-lactoyllysine; alternate" evidence="31">
    <location>
        <position position="17"/>
    </location>
</feature>
<feature type="modified residue" description="N6-(2-hydroxyisobutyryl)lysine; alternate" evidence="24">
    <location>
        <position position="21"/>
    </location>
</feature>
<feature type="modified residue" description="N6-(beta-hydroxybutyryl)lysine; alternate" evidence="27">
    <location>
        <position position="21"/>
    </location>
</feature>
<feature type="modified residue" description="N6-acetyllysine; alternate" evidence="16 18">
    <location>
        <position position="21"/>
    </location>
</feature>
<feature type="modified residue" description="N6-butyryllysine; alternate" evidence="26">
    <location>
        <position position="21"/>
    </location>
</feature>
<feature type="modified residue" description="N6-crotonyllysine; alternate" evidence="21">
    <location>
        <position position="21"/>
    </location>
</feature>
<feature type="modified residue" description="N6-lactoyllysine; alternate" evidence="31">
    <location>
        <position position="21"/>
    </location>
</feature>
<feature type="modified residue" description="N6-(2-hydroxyisobutyryl)lysine; alternate" evidence="24">
    <location>
        <position position="24"/>
    </location>
</feature>
<feature type="modified residue" description="N6-acetyllysine; alternate" evidence="2">
    <location>
        <position position="24"/>
    </location>
</feature>
<feature type="modified residue" description="N6-crotonyllysine; alternate" evidence="21">
    <location>
        <position position="24"/>
    </location>
</feature>
<feature type="modified residue" description="N6-lactoyllysine; alternate" evidence="31">
    <location>
        <position position="24"/>
    </location>
</feature>
<feature type="modified residue" description="N6-(2-hydroxyisobutyryl)lysine" evidence="24">
    <location>
        <position position="25"/>
    </location>
</feature>
<feature type="modified residue" description="N6-(2-hydroxyisobutyryl)lysine; alternate" evidence="24">
    <location>
        <position position="35"/>
    </location>
</feature>
<feature type="modified residue" description="N6-(beta-hydroxybutyryl)lysine; alternate" evidence="27">
    <location>
        <position position="35"/>
    </location>
</feature>
<feature type="modified residue" description="N6-crotonyllysine; alternate" evidence="21">
    <location>
        <position position="35"/>
    </location>
</feature>
<feature type="modified residue" description="N6-glutaryllysine; alternate" evidence="30">
    <location>
        <position position="35"/>
    </location>
</feature>
<feature type="modified residue" description="N6-succinyllysine; alternate" evidence="22">
    <location>
        <position position="35"/>
    </location>
</feature>
<feature type="modified residue" description="PolyADP-ribosyl glutamic acid" evidence="7">
    <location>
        <position position="36"/>
    </location>
</feature>
<feature type="modified residue" description="Phosphoserine; by AMPK" evidence="7">
    <location>
        <position position="37"/>
    </location>
</feature>
<feature type="modified residue" description="N6-(2-hydroxyisobutyryl)lysine; alternate" evidence="24">
    <location>
        <position position="44"/>
    </location>
</feature>
<feature type="modified residue" description="N6-glutaryllysine; alternate" evidence="30">
    <location>
        <position position="44"/>
    </location>
</feature>
<feature type="modified residue" description="N6-lactoyllysine; alternate" evidence="31">
    <location>
        <position position="44"/>
    </location>
</feature>
<feature type="modified residue" description="N6-(2-hydroxyisobutyryl)lysine; alternate" evidence="24">
    <location>
        <position position="47"/>
    </location>
</feature>
<feature type="modified residue" description="N6-glutaryllysine; alternate" evidence="30">
    <location>
        <position position="47"/>
    </location>
</feature>
<feature type="modified residue" description="N6-methyllysine; alternate" evidence="18">
    <location>
        <position position="47"/>
    </location>
</feature>
<feature type="modified residue" description="N6,N6-dimethyllysine; alternate" evidence="18">
    <location>
        <position position="58"/>
    </location>
</feature>
<feature type="modified residue" description="N6-(2-hydroxyisobutyryl)lysine; alternate" evidence="24">
    <location>
        <position position="58"/>
    </location>
</feature>
<feature type="modified residue" description="Dimethylated arginine" evidence="9">
    <location>
        <position position="80"/>
    </location>
</feature>
<feature type="modified residue" description="N6,N6,N6-trimethyllysine; alternate" evidence="9">
    <location>
        <position position="86"/>
    </location>
</feature>
<feature type="modified residue" description="N6-(2-hydroxyisobutyryl)lysine; alternate" evidence="24">
    <location>
        <position position="86"/>
    </location>
</feature>
<feature type="modified residue" description="N6-(beta-hydroxybutyryl)lysine; alternate" evidence="27">
    <location>
        <position position="86"/>
    </location>
</feature>
<feature type="modified residue" description="N6-acetyllysine; alternate" evidence="9">
    <location>
        <position position="86"/>
    </location>
</feature>
<feature type="modified residue" description="N6-lactoyllysine; alternate" evidence="31">
    <location>
        <position position="86"/>
    </location>
</feature>
<feature type="modified residue" description="Omega-N-methylarginine" evidence="9">
    <location>
        <position position="87"/>
    </location>
</feature>
<feature type="modified residue" description="Omega-N-methylarginine" evidence="9">
    <location>
        <position position="93"/>
    </location>
</feature>
<feature type="modified residue" description="N6-(2-hydroxyisobutyryl)lysine; alternate" evidence="24">
    <location>
        <position position="109"/>
    </location>
</feature>
<feature type="modified residue" description="N6-glutaryllysine; alternate" evidence="30">
    <location>
        <position position="109"/>
    </location>
</feature>
<feature type="modified residue" description="N6-lactoyllysine; alternate" evidence="31">
    <location>
        <position position="109"/>
    </location>
</feature>
<feature type="modified residue" description="N6-methyllysine; alternate" evidence="18">
    <location>
        <position position="109"/>
    </location>
</feature>
<feature type="modified residue" description="Phosphothreonine" evidence="5">
    <location>
        <position position="116"/>
    </location>
</feature>
<feature type="modified residue" description="N6-(2-hydroxyisobutyryl)lysine; alternate" evidence="24">
    <location>
        <position position="117"/>
    </location>
</feature>
<feature type="modified residue" description="N6-(beta-hydroxybutyryl)lysine; alternate" evidence="27">
    <location>
        <position position="117"/>
    </location>
</feature>
<feature type="modified residue" description="N6-glutaryllysine; alternate" evidence="30">
    <location>
        <position position="117"/>
    </location>
</feature>
<feature type="modified residue" description="N6-lactoyllysine; alternate" evidence="31">
    <location>
        <position position="117"/>
    </location>
</feature>
<feature type="modified residue" description="N6-malonyllysine; alternate" evidence="22">
    <location>
        <position position="117"/>
    </location>
</feature>
<feature type="modified residue" description="N6-methylated lysine; alternate" evidence="5">
    <location>
        <position position="117"/>
    </location>
</feature>
<feature type="modified residue" description="N6-succinyllysine; alternate" evidence="22">
    <location>
        <position position="117"/>
    </location>
</feature>
<feature type="modified residue" description="N6-(2-hydroxyisobutyryl)lysine; alternate" evidence="24">
    <location>
        <position position="121"/>
    </location>
</feature>
<feature type="modified residue" description="N6-(beta-hydroxybutyryl)lysine; alternate" evidence="27">
    <location>
        <position position="121"/>
    </location>
</feature>
<feature type="modified residue" description="N6-glutaryllysine; alternate" evidence="30">
    <location>
        <position position="121"/>
    </location>
</feature>
<feature type="modified residue" description="N6-lactoyllysine; alternate" evidence="31">
    <location>
        <position position="121"/>
    </location>
</feature>
<feature type="modified residue" description="N6-succinyllysine; alternate" evidence="22">
    <location>
        <position position="121"/>
    </location>
</feature>
<feature type="glycosylation site" description="O-linked (GlcNAc) serine" evidence="4">
    <location>
        <position position="113"/>
    </location>
</feature>
<feature type="cross-link" description="Glycyl lysine isopeptide (Lys-Gly) (interchain with G-Cter in SUMO2); alternate" evidence="3">
    <location>
        <position position="6"/>
    </location>
</feature>
<feature type="cross-link" description="Glycyl lysine isopeptide (Lys-Gly) (interchain with G-Cter in SUMO2); alternate" evidence="6">
    <location>
        <position position="21"/>
    </location>
</feature>
<feature type="cross-link" description="Glycyl lysine isopeptide (Lys-Gly) (interchain with G-Cter in ubiquitin); alternate" evidence="20">
    <location>
        <position position="35"/>
    </location>
</feature>
<feature type="cross-link" description="Glycyl lysine isopeptide (Lys-Gly) (interchain with G-Cter in ubiquitin); alternate" evidence="17 18 19">
    <location>
        <position position="121"/>
    </location>
</feature>
<feature type="sequence conflict" description="In Ref. 1; CAA24950." evidence="34" ref="1">
    <original>KRKRS</original>
    <variation>SAAH</variation>
    <location>
        <begin position="29"/>
        <end position="33"/>
    </location>
</feature>
<feature type="helix" evidence="41">
    <location>
        <begin position="39"/>
        <end position="49"/>
    </location>
</feature>
<feature type="strand" evidence="43">
    <location>
        <begin position="50"/>
        <end position="52"/>
    </location>
</feature>
<feature type="strand" evidence="41">
    <location>
        <begin position="54"/>
        <end position="56"/>
    </location>
</feature>
<feature type="helix" evidence="41">
    <location>
        <begin position="57"/>
        <end position="83"/>
    </location>
</feature>
<feature type="turn" evidence="42">
    <location>
        <begin position="84"/>
        <end position="86"/>
    </location>
</feature>
<feature type="strand" evidence="44">
    <location>
        <begin position="88"/>
        <end position="90"/>
    </location>
</feature>
<feature type="helix" evidence="41">
    <location>
        <begin position="92"/>
        <end position="102"/>
    </location>
</feature>
<feature type="helix" evidence="41">
    <location>
        <begin position="105"/>
        <end position="124"/>
    </location>
</feature>
<keyword id="KW-0002">3D-structure</keyword>
<keyword id="KW-0007">Acetylation</keyword>
<keyword id="KW-0013">ADP-ribosylation</keyword>
<keyword id="KW-0044">Antibiotic</keyword>
<keyword id="KW-0929">Antimicrobial</keyword>
<keyword id="KW-0158">Chromosome</keyword>
<keyword id="KW-0903">Direct protein sequencing</keyword>
<keyword id="KW-0238">DNA-binding</keyword>
<keyword id="KW-0325">Glycoprotein</keyword>
<keyword id="KW-0379">Hydroxylation</keyword>
<keyword id="KW-1017">Isopeptide bond</keyword>
<keyword id="KW-0488">Methylation</keyword>
<keyword id="KW-0544">Nucleosome core</keyword>
<keyword id="KW-0539">Nucleus</keyword>
<keyword id="KW-0597">Phosphoprotein</keyword>
<keyword id="KW-1185">Reference proteome</keyword>
<keyword id="KW-0832">Ubl conjugation</keyword>
<sequence>MPEPAKSAPAPKKGSKKAVTKAQKKDGKKRKRSRKESYSIYVYKVLKQVHPDTGISSKAMGIMNSFVNDIFERIAGEASRLAHYNKRSTITSREIQTAVRLLLPGELAKHAVSEGTKAVTKYTSAK</sequence>
<organism>
    <name type="scientific">Homo sapiens</name>
    <name type="common">Human</name>
    <dbReference type="NCBI Taxonomy" id="9606"/>
    <lineage>
        <taxon>Eukaryota</taxon>
        <taxon>Metazoa</taxon>
        <taxon>Chordata</taxon>
        <taxon>Craniata</taxon>
        <taxon>Vertebrata</taxon>
        <taxon>Euteleostomi</taxon>
        <taxon>Mammalia</taxon>
        <taxon>Eutheria</taxon>
        <taxon>Euarchontoglires</taxon>
        <taxon>Primates</taxon>
        <taxon>Haplorrhini</taxon>
        <taxon>Catarrhini</taxon>
        <taxon>Hominidae</taxon>
        <taxon>Homo</taxon>
    </lineage>
</organism>
<comment type="function">
    <text>Core component of nucleosome. Nucleosomes wrap and compact DNA into chromatin, limiting DNA accessibility to the cellular machineries which require DNA as a template. Histones thereby play a central role in transcription regulation, DNA repair, DNA replication and chromosomal stability. DNA accessibility is regulated via a complex set of post-translational modifications of histones, also called histone code, and nucleosome remodeling.</text>
</comment>
<comment type="function">
    <text>Has broad antibacterial activity. May contribute to the formation of the functional antimicrobial barrier of the colonic epithelium, and to the bactericidal activity of amniotic fluid.</text>
</comment>
<comment type="subunit">
    <text evidence="23 25">The nucleosome is a histone octamer containing two molecules each of H2A, H2B, H3 and H4 assembled in one H3-H4 heterotetramer and two H2A-H2B heterodimers. The octamer wraps approximately 147 bp of DNA. Heterodimer H2BC11 and H2AZ1 interacts with VPS72 (via N-terminal domain) (PubMed:26974126).</text>
</comment>
<comment type="interaction">
    <interactant intactId="EBI-6150252">
        <id>P06899</id>
    </interactant>
    <interactant intactId="EBI-358971">
        <id>P04908</id>
        <label>H2AC8</label>
    </interactant>
    <organismsDiffer>false</organismsDiffer>
    <experiments>13</experiments>
</comment>
<comment type="subcellular location">
    <subcellularLocation>
        <location>Nucleus</location>
    </subcellularLocation>
    <subcellularLocation>
        <location>Chromosome</location>
    </subcellularLocation>
</comment>
<comment type="PTM">
    <text evidence="11 18">Monoubiquitination at Lys-35 (H2BK34Ub) by the MSL1/MSL2 dimer is required for histone H3 'Lys-4' (H3K4me) and 'Lys-79' (H3K79me) methylation and transcription activation at specific gene loci, such as HOXA9 and MEIS1 loci. Similarly, monoubiquitination at Lys-121 (H2BK120Ub) by the RNF20/40 complex gives a specific tag for epigenetic transcriptional activation and is also prerequisite for histone H3 'Lys-4' and 'Lys-79' methylation. It also functions cooperatively with the FACT dimer to stimulate elongation by RNA polymerase II. H2BK120Ub also acts as a regulator of mRNA splicing: deubiquitination by USP49 is required for efficient cotranscriptional splicing of a large set of exons.</text>
</comment>
<comment type="PTM">
    <text evidence="7 13">Phosphorylation at Ser-37 (H2BS36ph) by AMPK in response to stress promotes transcription (By similarity). Phosphorylated on Ser-15 (H2BS14ph) by STK4/MST1 during apoptosis; which facilitates apoptotic chromatin condensation (PubMed:12757711). Also phosphorylated on Ser-15 in response to DNA double strand breaks (DSBs), and in correlation with somatic hypermutation and immunoglobulin class-switch recombination.</text>
</comment>
<comment type="PTM">
    <text evidence="4">GlcNAcylation at Ser-113 promotes monoubiquitination of Lys-121. It fluctuates in response to extracellular glucose, and associates with transcribed genes (By similarity).</text>
</comment>
<comment type="PTM">
    <text evidence="8 28 32">ADP-ribosylated by PARP1 or PARP2 on Ser-7 (H2BS6ADPr) in response to DNA damage (PubMed:34874266). H2BS6ADPr promotes recruitment of CHD1L (PubMed:34874266). Mono-ADP-ribosylated on Glu-3 (H2BE2ADPr) by PARP3 in response to single-strand breaks (PubMed:27530147). Poly ADP-ribosylation on Glu-36 (H2BE35ADPr) by PARP1 regulates adipogenesis: it inhibits phosphorylation at Ser-37 (H2BS36ph), thereby blocking expression of pro-adipogenetic genes (By similarity).</text>
</comment>
<comment type="PTM">
    <text evidence="21">Crotonylation (Kcr) is specifically present in male germ cells and marks testis-specific genes in post-meiotic cells, including X-linked genes that escape sex chromosome inactivation in haploid cells. Crotonylation marks active promoters and enhancers and confers resistance to transcriptional repressors. It is also associated with post-meiotically activated genes on autosomes.</text>
</comment>
<comment type="PTM">
    <text evidence="31">Lactylated in macrophages by EP300/P300 by using lactoyl-CoA directly derived from endogenous or exogenous lactate, leading to stimulates gene transcription.</text>
</comment>
<comment type="similarity">
    <text evidence="34">Belongs to the histone H2B family.</text>
</comment>
<name>H2B1J_HUMAN</name>
<reference key="1">
    <citation type="journal article" date="1983" name="Nucleic Acids Res.">
        <title>The primary structure and expression of four cloned human histone genes.</title>
        <authorList>
            <person name="Zhong R."/>
            <person name="Roeder R.G."/>
            <person name="Heintz N."/>
        </authorList>
    </citation>
    <scope>NUCLEOTIDE SEQUENCE [GENOMIC DNA]</scope>
</reference>
<reference key="2">
    <citation type="journal article" date="2002" name="Genomics">
        <title>The human and mouse replication-dependent histone genes.</title>
        <authorList>
            <person name="Marzluff W.F."/>
            <person name="Gongidi P."/>
            <person name="Woods K.R."/>
            <person name="Jin J."/>
            <person name="Maltais L.J."/>
        </authorList>
    </citation>
    <scope>NUCLEOTIDE SEQUENCE [GENOMIC DNA]</scope>
</reference>
<reference key="3">
    <citation type="journal article" date="2004" name="Nat. Genet.">
        <title>Complete sequencing and characterization of 21,243 full-length human cDNAs.</title>
        <authorList>
            <person name="Ota T."/>
            <person name="Suzuki Y."/>
            <person name="Nishikawa T."/>
            <person name="Otsuki T."/>
            <person name="Sugiyama T."/>
            <person name="Irie R."/>
            <person name="Wakamatsu A."/>
            <person name="Hayashi K."/>
            <person name="Sato H."/>
            <person name="Nagai K."/>
            <person name="Kimura K."/>
            <person name="Makita H."/>
            <person name="Sekine M."/>
            <person name="Obayashi M."/>
            <person name="Nishi T."/>
            <person name="Shibahara T."/>
            <person name="Tanaka T."/>
            <person name="Ishii S."/>
            <person name="Yamamoto J."/>
            <person name="Saito K."/>
            <person name="Kawai Y."/>
            <person name="Isono Y."/>
            <person name="Nakamura Y."/>
            <person name="Nagahari K."/>
            <person name="Murakami K."/>
            <person name="Yasuda T."/>
            <person name="Iwayanagi T."/>
            <person name="Wagatsuma M."/>
            <person name="Shiratori A."/>
            <person name="Sudo H."/>
            <person name="Hosoiri T."/>
            <person name="Kaku Y."/>
            <person name="Kodaira H."/>
            <person name="Kondo H."/>
            <person name="Sugawara M."/>
            <person name="Takahashi M."/>
            <person name="Kanda K."/>
            <person name="Yokoi T."/>
            <person name="Furuya T."/>
            <person name="Kikkawa E."/>
            <person name="Omura Y."/>
            <person name="Abe K."/>
            <person name="Kamihara K."/>
            <person name="Katsuta N."/>
            <person name="Sato K."/>
            <person name="Tanikawa M."/>
            <person name="Yamazaki M."/>
            <person name="Ninomiya K."/>
            <person name="Ishibashi T."/>
            <person name="Yamashita H."/>
            <person name="Murakawa K."/>
            <person name="Fujimori K."/>
            <person name="Tanai H."/>
            <person name="Kimata M."/>
            <person name="Watanabe M."/>
            <person name="Hiraoka S."/>
            <person name="Chiba Y."/>
            <person name="Ishida S."/>
            <person name="Ono Y."/>
            <person name="Takiguchi S."/>
            <person name="Watanabe S."/>
            <person name="Yosida M."/>
            <person name="Hotuta T."/>
            <person name="Kusano J."/>
            <person name="Kanehori K."/>
            <person name="Takahashi-Fujii A."/>
            <person name="Hara H."/>
            <person name="Tanase T.-O."/>
            <person name="Nomura Y."/>
            <person name="Togiya S."/>
            <person name="Komai F."/>
            <person name="Hara R."/>
            <person name="Takeuchi K."/>
            <person name="Arita M."/>
            <person name="Imose N."/>
            <person name="Musashino K."/>
            <person name="Yuuki H."/>
            <person name="Oshima A."/>
            <person name="Sasaki N."/>
            <person name="Aotsuka S."/>
            <person name="Yoshikawa Y."/>
            <person name="Matsunawa H."/>
            <person name="Ichihara T."/>
            <person name="Shiohata N."/>
            <person name="Sano S."/>
            <person name="Moriya S."/>
            <person name="Momiyama H."/>
            <person name="Satoh N."/>
            <person name="Takami S."/>
            <person name="Terashima Y."/>
            <person name="Suzuki O."/>
            <person name="Nakagawa S."/>
            <person name="Senoh A."/>
            <person name="Mizoguchi H."/>
            <person name="Goto Y."/>
            <person name="Shimizu F."/>
            <person name="Wakebe H."/>
            <person name="Hishigaki H."/>
            <person name="Watanabe T."/>
            <person name="Sugiyama A."/>
            <person name="Takemoto M."/>
            <person name="Kawakami B."/>
            <person name="Yamazaki M."/>
            <person name="Watanabe K."/>
            <person name="Kumagai A."/>
            <person name="Itakura S."/>
            <person name="Fukuzumi Y."/>
            <person name="Fujimori Y."/>
            <person name="Komiyama M."/>
            <person name="Tashiro H."/>
            <person name="Tanigami A."/>
            <person name="Fujiwara T."/>
            <person name="Ono T."/>
            <person name="Yamada K."/>
            <person name="Fujii Y."/>
            <person name="Ozaki K."/>
            <person name="Hirao M."/>
            <person name="Ohmori Y."/>
            <person name="Kawabata A."/>
            <person name="Hikiji T."/>
            <person name="Kobatake N."/>
            <person name="Inagaki H."/>
            <person name="Ikema Y."/>
            <person name="Okamoto S."/>
            <person name="Okitani R."/>
            <person name="Kawakami T."/>
            <person name="Noguchi S."/>
            <person name="Itoh T."/>
            <person name="Shigeta K."/>
            <person name="Senba T."/>
            <person name="Matsumura K."/>
            <person name="Nakajima Y."/>
            <person name="Mizuno T."/>
            <person name="Morinaga M."/>
            <person name="Sasaki M."/>
            <person name="Togashi T."/>
            <person name="Oyama M."/>
            <person name="Hata H."/>
            <person name="Watanabe M."/>
            <person name="Komatsu T."/>
            <person name="Mizushima-Sugano J."/>
            <person name="Satoh T."/>
            <person name="Shirai Y."/>
            <person name="Takahashi Y."/>
            <person name="Nakagawa K."/>
            <person name="Okumura K."/>
            <person name="Nagase T."/>
            <person name="Nomura N."/>
            <person name="Kikuchi H."/>
            <person name="Masuho Y."/>
            <person name="Yamashita R."/>
            <person name="Nakai K."/>
            <person name="Yada T."/>
            <person name="Nakamura Y."/>
            <person name="Ohara O."/>
            <person name="Isogai T."/>
            <person name="Sugano S."/>
        </authorList>
    </citation>
    <scope>NUCLEOTIDE SEQUENCE [LARGE SCALE MRNA]</scope>
    <source>
        <tissue>Hippocampus</tissue>
    </source>
</reference>
<reference key="4">
    <citation type="journal article" date="2003" name="Nature">
        <title>The DNA sequence and analysis of human chromosome 6.</title>
        <authorList>
            <person name="Mungall A.J."/>
            <person name="Palmer S.A."/>
            <person name="Sims S.K."/>
            <person name="Edwards C.A."/>
            <person name="Ashurst J.L."/>
            <person name="Wilming L."/>
            <person name="Jones M.C."/>
            <person name="Horton R."/>
            <person name="Hunt S.E."/>
            <person name="Scott C.E."/>
            <person name="Gilbert J.G.R."/>
            <person name="Clamp M.E."/>
            <person name="Bethel G."/>
            <person name="Milne S."/>
            <person name="Ainscough R."/>
            <person name="Almeida J.P."/>
            <person name="Ambrose K.D."/>
            <person name="Andrews T.D."/>
            <person name="Ashwell R.I.S."/>
            <person name="Babbage A.K."/>
            <person name="Bagguley C.L."/>
            <person name="Bailey J."/>
            <person name="Banerjee R."/>
            <person name="Barker D.J."/>
            <person name="Barlow K.F."/>
            <person name="Bates K."/>
            <person name="Beare D.M."/>
            <person name="Beasley H."/>
            <person name="Beasley O."/>
            <person name="Bird C.P."/>
            <person name="Blakey S.E."/>
            <person name="Bray-Allen S."/>
            <person name="Brook J."/>
            <person name="Brown A.J."/>
            <person name="Brown J.Y."/>
            <person name="Burford D.C."/>
            <person name="Burrill W."/>
            <person name="Burton J."/>
            <person name="Carder C."/>
            <person name="Carter N.P."/>
            <person name="Chapman J.C."/>
            <person name="Clark S.Y."/>
            <person name="Clark G."/>
            <person name="Clee C.M."/>
            <person name="Clegg S."/>
            <person name="Cobley V."/>
            <person name="Collier R.E."/>
            <person name="Collins J.E."/>
            <person name="Colman L.K."/>
            <person name="Corby N.R."/>
            <person name="Coville G.J."/>
            <person name="Culley K.M."/>
            <person name="Dhami P."/>
            <person name="Davies J."/>
            <person name="Dunn M."/>
            <person name="Earthrowl M.E."/>
            <person name="Ellington A.E."/>
            <person name="Evans K.A."/>
            <person name="Faulkner L."/>
            <person name="Francis M.D."/>
            <person name="Frankish A."/>
            <person name="Frankland J."/>
            <person name="French L."/>
            <person name="Garner P."/>
            <person name="Garnett J."/>
            <person name="Ghori M.J."/>
            <person name="Gilby L.M."/>
            <person name="Gillson C.J."/>
            <person name="Glithero R.J."/>
            <person name="Grafham D.V."/>
            <person name="Grant M."/>
            <person name="Gribble S."/>
            <person name="Griffiths C."/>
            <person name="Griffiths M.N.D."/>
            <person name="Hall R."/>
            <person name="Halls K.S."/>
            <person name="Hammond S."/>
            <person name="Harley J.L."/>
            <person name="Hart E.A."/>
            <person name="Heath P.D."/>
            <person name="Heathcott R."/>
            <person name="Holmes S.J."/>
            <person name="Howden P.J."/>
            <person name="Howe K.L."/>
            <person name="Howell G.R."/>
            <person name="Huckle E."/>
            <person name="Humphray S.J."/>
            <person name="Humphries M.D."/>
            <person name="Hunt A.R."/>
            <person name="Johnson C.M."/>
            <person name="Joy A.A."/>
            <person name="Kay M."/>
            <person name="Keenan S.J."/>
            <person name="Kimberley A.M."/>
            <person name="King A."/>
            <person name="Laird G.K."/>
            <person name="Langford C."/>
            <person name="Lawlor S."/>
            <person name="Leongamornlert D.A."/>
            <person name="Leversha M."/>
            <person name="Lloyd C.R."/>
            <person name="Lloyd D.M."/>
            <person name="Loveland J.E."/>
            <person name="Lovell J."/>
            <person name="Martin S."/>
            <person name="Mashreghi-Mohammadi M."/>
            <person name="Maslen G.L."/>
            <person name="Matthews L."/>
            <person name="McCann O.T."/>
            <person name="McLaren S.J."/>
            <person name="McLay K."/>
            <person name="McMurray A."/>
            <person name="Moore M.J.F."/>
            <person name="Mullikin J.C."/>
            <person name="Niblett D."/>
            <person name="Nickerson T."/>
            <person name="Novik K.L."/>
            <person name="Oliver K."/>
            <person name="Overton-Larty E.K."/>
            <person name="Parker A."/>
            <person name="Patel R."/>
            <person name="Pearce A.V."/>
            <person name="Peck A.I."/>
            <person name="Phillimore B.J.C.T."/>
            <person name="Phillips S."/>
            <person name="Plumb R.W."/>
            <person name="Porter K.M."/>
            <person name="Ramsey Y."/>
            <person name="Ranby S.A."/>
            <person name="Rice C.M."/>
            <person name="Ross M.T."/>
            <person name="Searle S.M."/>
            <person name="Sehra H.K."/>
            <person name="Sheridan E."/>
            <person name="Skuce C.D."/>
            <person name="Smith S."/>
            <person name="Smith M."/>
            <person name="Spraggon L."/>
            <person name="Squares S.L."/>
            <person name="Steward C.A."/>
            <person name="Sycamore N."/>
            <person name="Tamlyn-Hall G."/>
            <person name="Tester J."/>
            <person name="Theaker A.J."/>
            <person name="Thomas D.W."/>
            <person name="Thorpe A."/>
            <person name="Tracey A."/>
            <person name="Tromans A."/>
            <person name="Tubby B."/>
            <person name="Wall M."/>
            <person name="Wallis J.M."/>
            <person name="West A.P."/>
            <person name="White S.S."/>
            <person name="Whitehead S.L."/>
            <person name="Whittaker H."/>
            <person name="Wild A."/>
            <person name="Willey D.J."/>
            <person name="Wilmer T.E."/>
            <person name="Wood J.M."/>
            <person name="Wray P.W."/>
            <person name="Wyatt J.C."/>
            <person name="Young L."/>
            <person name="Younger R.M."/>
            <person name="Bentley D.R."/>
            <person name="Coulson A."/>
            <person name="Durbin R.M."/>
            <person name="Hubbard T."/>
            <person name="Sulston J.E."/>
            <person name="Dunham I."/>
            <person name="Rogers J."/>
            <person name="Beck S."/>
        </authorList>
    </citation>
    <scope>NUCLEOTIDE SEQUENCE [LARGE SCALE GENOMIC DNA]</scope>
</reference>
<reference key="5">
    <citation type="submission" date="2005-07" db="EMBL/GenBank/DDBJ databases">
        <authorList>
            <person name="Mural R.J."/>
            <person name="Istrail S."/>
            <person name="Sutton G.G."/>
            <person name="Florea L."/>
            <person name="Halpern A.L."/>
            <person name="Mobarry C.M."/>
            <person name="Lippert R."/>
            <person name="Walenz B."/>
            <person name="Shatkay H."/>
            <person name="Dew I."/>
            <person name="Miller J.R."/>
            <person name="Flanigan M.J."/>
            <person name="Edwards N.J."/>
            <person name="Bolanos R."/>
            <person name="Fasulo D."/>
            <person name="Halldorsson B.V."/>
            <person name="Hannenhalli S."/>
            <person name="Turner R."/>
            <person name="Yooseph S."/>
            <person name="Lu F."/>
            <person name="Nusskern D.R."/>
            <person name="Shue B.C."/>
            <person name="Zheng X.H."/>
            <person name="Zhong F."/>
            <person name="Delcher A.L."/>
            <person name="Huson D.H."/>
            <person name="Kravitz S.A."/>
            <person name="Mouchard L."/>
            <person name="Reinert K."/>
            <person name="Remington K.A."/>
            <person name="Clark A.G."/>
            <person name="Waterman M.S."/>
            <person name="Eichler E.E."/>
            <person name="Adams M.D."/>
            <person name="Hunkapiller M.W."/>
            <person name="Myers E.W."/>
            <person name="Venter J.C."/>
        </authorList>
    </citation>
    <scope>NUCLEOTIDE SEQUENCE [LARGE SCALE GENOMIC DNA]</scope>
</reference>
<reference key="6">
    <citation type="journal article" date="1989" name="J. Biol. Chem.">
        <title>Glucocorticoid-induced lymphocytolysis is not mediated by an induced endonuclease.</title>
        <authorList>
            <person name="Alnemri E.S."/>
            <person name="Litwack G."/>
        </authorList>
    </citation>
    <scope>PROTEIN SEQUENCE OF 2-27</scope>
</reference>
<reference key="7">
    <citation type="journal article" date="2002" name="J. Immunol.">
        <title>Endotoxin-neutralizing antimicrobial proteins of the human placenta.</title>
        <authorList>
            <person name="Kim H.S."/>
            <person name="Cho J.H."/>
            <person name="Park H.W."/>
            <person name="Yoon H."/>
            <person name="Kim M.S."/>
            <person name="Kim S.C."/>
        </authorList>
    </citation>
    <scope>PROTEIN SEQUENCE OF 2-21</scope>
    <scope>FUNCTION</scope>
</reference>
<reference key="8">
    <citation type="journal article" date="1996" name="Eur. J. Biochem.">
        <title>Biochemical and antibacterial analysis of human wound and blister fluid.</title>
        <authorList>
            <person name="Frohm M."/>
            <person name="Gunne H."/>
            <person name="Bergman A.-C."/>
            <person name="Agerberth B."/>
            <person name="Bergman T."/>
            <person name="Boman A."/>
            <person name="Liden S."/>
            <person name="Joernvall H."/>
            <person name="Boman H.G."/>
        </authorList>
    </citation>
    <scope>PROTEIN SEQUENCE OF 2-13</scope>
</reference>
<reference key="9">
    <citation type="journal article" date="2003" name="Peptides">
        <title>Antimicrobial peptides in the first line defence of human colon mucosa.</title>
        <authorList>
            <person name="Tollin M."/>
            <person name="Bergman P."/>
            <person name="Svenberg T."/>
            <person name="Joernvall H."/>
            <person name="Gudmundsson G.H."/>
            <person name="Agerberth B."/>
        </authorList>
    </citation>
    <scope>PROTEIN SEQUENCE OF 2-13</scope>
    <scope>FUNCTION</scope>
</reference>
<reference key="10">
    <citation type="journal article" date="2003" name="Peptides">
        <title>Antimicrobial polypeptides of the human colonic epithelium.</title>
        <authorList>
            <person name="Howell S.J."/>
            <person name="Wilk D."/>
            <person name="Yadav S.P."/>
            <person name="Bevins C.L."/>
        </authorList>
    </citation>
    <scope>PROTEIN SEQUENCE OF 2-13</scope>
    <scope>FUNCTION</scope>
</reference>
<reference key="11">
    <citation type="journal article" date="2006" name="Mol. Cell. Proteomics">
        <title>Quantitative proteomic analysis of post-translational modifications of human histones.</title>
        <authorList>
            <person name="Beck H.C."/>
            <person name="Nielsen E.C."/>
            <person name="Matthiesen R."/>
            <person name="Jensen L.H."/>
            <person name="Sehested M."/>
            <person name="Finn P."/>
            <person name="Grauslund M."/>
            <person name="Hansen A.M."/>
            <person name="Jensen O.N."/>
        </authorList>
    </citation>
    <scope>PROTEIN SEQUENCE OF 7-24</scope>
    <scope>ACETYLATION AT LYS-6; LYS-12; LYS-13; LYS-16; LYS-17 AND LYS-21</scope>
    <scope>METHYLATION AT LYS-47; LYS-58 AND LYS-109</scope>
    <scope>UBIQUITINATION AT LYS-121</scope>
    <scope>IDENTIFICATION BY MASS SPECTROMETRY</scope>
</reference>
<reference key="12">
    <citation type="journal article" date="2002" name="J. Biol. Chem.">
        <title>Global regulation of post-translational modifications on core histones.</title>
        <authorList>
            <person name="Galasinski S.C."/>
            <person name="Louie D.F."/>
            <person name="Gloor K.K."/>
            <person name="Resing K.A."/>
            <person name="Ahn N.G."/>
        </authorList>
    </citation>
    <scope>IDENTIFICATION BY MASS SPECTROMETRY</scope>
    <scope>METHYLATION</scope>
</reference>
<reference key="13">
    <citation type="journal article" date="2003" name="Cell">
        <title>Apoptotic phosphorylation of histone H2B is mediated by mammalian sterile twenty kinase.</title>
        <authorList>
            <person name="Cheung W.L."/>
            <person name="Ajiro K."/>
            <person name="Samejima K."/>
            <person name="Kloc M."/>
            <person name="Cheung P."/>
            <person name="Mizzen C.A."/>
            <person name="Beeser A."/>
            <person name="Etkin L.D."/>
            <person name="Chernoff J."/>
            <person name="Earnshaw W.C."/>
            <person name="Allis C.D."/>
        </authorList>
    </citation>
    <scope>PHOSPHORYLATION AT SER-15</scope>
</reference>
<reference key="14">
    <citation type="journal article" date="2005" name="Mol. Cell">
        <title>Monoubiquitination of human histone H2B: the factors involved and their roles in HOX gene regulation.</title>
        <authorList>
            <person name="Zhu B."/>
            <person name="Zheng Y."/>
            <person name="Pham A.-D."/>
            <person name="Mandal S.S."/>
            <person name="Erdjument-Bromage H."/>
            <person name="Tempst P."/>
            <person name="Reinberg D."/>
        </authorList>
    </citation>
    <scope>UBIQUITINATION AT LYS-121</scope>
</reference>
<reference key="15">
    <citation type="journal article" date="2005" name="Mol. Cell. Biochem.">
        <title>Inhibition of core histones acetylation by carcinogenic nickel(II).</title>
        <authorList>
            <person name="Golebiowski F."/>
            <person name="Kasprzak K.S."/>
        </authorList>
    </citation>
    <scope>ACETYLATION AT LYS-6; LYS-13; LYS-16 AND LYS-21</scope>
</reference>
<reference key="16">
    <citation type="journal article" date="2006" name="Cell">
        <title>Histone H2B monoubiquitination functions cooperatively with FACT to regulate elongation by RNA polymerase II.</title>
        <authorList>
            <person name="Pavri R."/>
            <person name="Zhu B."/>
            <person name="Li G."/>
            <person name="Trojer P."/>
            <person name="Mandal S."/>
            <person name="Shilatifard A."/>
            <person name="Reinberg D."/>
        </authorList>
    </citation>
    <scope>UBIQUITINATION AT LYS-121</scope>
</reference>
<reference key="17">
    <citation type="journal article" date="2011" name="Cell">
        <title>Identification of 67 histone marks and histone lysine crotonylation as a new type of histone modification.</title>
        <authorList>
            <person name="Tan M."/>
            <person name="Luo H."/>
            <person name="Lee S."/>
            <person name="Jin F."/>
            <person name="Yang J.S."/>
            <person name="Montellier E."/>
            <person name="Buchou T."/>
            <person name="Cheng Z."/>
            <person name="Rousseaux S."/>
            <person name="Rajagopal N."/>
            <person name="Lu Z."/>
            <person name="Ye Z."/>
            <person name="Zhu Q."/>
            <person name="Wysocka J."/>
            <person name="Ye Y."/>
            <person name="Khochbin S."/>
            <person name="Ren B."/>
            <person name="Zhao Y."/>
        </authorList>
    </citation>
    <scope>CROTONYLATION AT LYS-6; LYS-12; LYS-13; LYS-16; LYS-17; LYS-21; LYS-24 AND LYS-35</scope>
</reference>
<reference key="18">
    <citation type="journal article" date="2011" name="Mol. Cell">
        <title>The RING finger protein MSL2 in the MOF complex is an E3 ubiquitin ligase for H2B K34 and is involved in crosstalk with H3 K4 and K79 methylation.</title>
        <authorList>
            <person name="Wu L."/>
            <person name="Zee B.M."/>
            <person name="Wang Y."/>
            <person name="Garcia B.A."/>
            <person name="Dou Y."/>
        </authorList>
    </citation>
    <scope>UBIQUITINATION AT LYS-35</scope>
</reference>
<reference key="19">
    <citation type="journal article" date="2012" name="Mol. Cell. Proteomics">
        <title>Lysine succinylation and lysine malonylation in histones.</title>
        <authorList>
            <person name="Xie Z."/>
            <person name="Dai J."/>
            <person name="Dai L."/>
            <person name="Tan M."/>
            <person name="Cheng Z."/>
            <person name="Wu Y."/>
            <person name="Boeke J.D."/>
            <person name="Zhao Y."/>
        </authorList>
    </citation>
    <scope>SUCCINYLATION AT LYS-35; LYS-117 AND LYS-121</scope>
    <scope>MALONYLATION AT LYS-117</scope>
</reference>
<reference key="20">
    <citation type="journal article" date="2013" name="Genes Dev.">
        <title>USP49 deubiquitinates histone H2B and regulates cotranscriptional pre-mRNA splicing.</title>
        <authorList>
            <person name="Zhang Z."/>
            <person name="Jones A."/>
            <person name="Joo H.Y."/>
            <person name="Zhou D."/>
            <person name="Cao Y."/>
            <person name="Chen S."/>
            <person name="Erdjument-Bromage H."/>
            <person name="Renfrow M."/>
            <person name="He H."/>
            <person name="Tempst P."/>
            <person name="Townes T.M."/>
            <person name="Giles K.E."/>
            <person name="Ma L."/>
            <person name="Wang H."/>
        </authorList>
    </citation>
    <scope>UBIQUITINATION</scope>
    <scope>DEUBIQUITINATION BY USP49</scope>
</reference>
<reference key="21">
    <citation type="journal article" date="2014" name="Nature">
        <title>ANP32E is a histone chaperone that removes H2A.Z from chromatin.</title>
        <authorList>
            <person name="Obri A."/>
            <person name="Ouararhni K."/>
            <person name="Papin C."/>
            <person name="Diebold M.L."/>
            <person name="Padmanabhan K."/>
            <person name="Marek M."/>
            <person name="Stoll I."/>
            <person name="Roy L."/>
            <person name="Reilly P.T."/>
            <person name="Mak T.W."/>
            <person name="Dimitrov S."/>
            <person name="Romier C."/>
            <person name="Hamiche A."/>
        </authorList>
    </citation>
    <scope>X-RAY CRYSTALLOGRAPHY (1.48 ANGSTROMS) OF 31-126 IN COMPLEX WITH H2AZ1 AND ANP32E</scope>
</reference>
<reference evidence="36" key="22">
    <citation type="journal article" date="2016" name="Nucleic Acids Res.">
        <title>Structure and function of human histone H3.Y nucleosome.</title>
        <authorList>
            <person name="Kujirai T."/>
            <person name="Horikoshi N."/>
            <person name="Sato K."/>
            <person name="Maehara K."/>
            <person name="Machida S."/>
            <person name="Osakabe A."/>
            <person name="Kimura H."/>
            <person name="Ohkawa Y."/>
            <person name="Kurumizaka H."/>
        </authorList>
    </citation>
    <scope>X-RAY CRYSTALLOGRAPHY (2.80 ANGSTROMS) IN COMPLEX WITH H2A; H3.Y AND H4</scope>
</reference>
<reference key="23">
    <citation type="journal article" date="2014" name="Nat. Chem. Biol.">
        <title>Lysine 2-hydroxyisobutyrylation is a widely distributed active histone mark.</title>
        <authorList>
            <person name="Dai L."/>
            <person name="Peng C."/>
            <person name="Montellier E."/>
            <person name="Lu Z."/>
            <person name="Chen Y."/>
            <person name="Ishii H."/>
            <person name="Debernardi A."/>
            <person name="Buchou T."/>
            <person name="Rousseaux S."/>
            <person name="Jin F."/>
            <person name="Sabari B.R."/>
            <person name="Deng Z."/>
            <person name="Allis C.D."/>
            <person name="Ren B."/>
            <person name="Khochbin S."/>
            <person name="Zhao Y."/>
        </authorList>
    </citation>
    <scope>HYDROXYBUTYRYLATION AT LYS-6; LYS-13; LYS-21; LYS-24; LYS-25; LYS-35; LYS-44; LYS-47; LYS-58; LYS-86; LYS-109; LYS-117 AND LYS-121</scope>
</reference>
<reference key="24">
    <citation type="journal article" date="2016" name="Mol. Cell">
        <title>Dynamic competing histone H4 K5K8 acetylation and butyrylation are hallmarks of highly active gene promoters.</title>
        <authorList>
            <person name="Goudarzi A."/>
            <person name="Zhang D."/>
            <person name="Huang H."/>
            <person name="Barral S."/>
            <person name="Kwon O.K."/>
            <person name="Qi S."/>
            <person name="Tang Z."/>
            <person name="Buchou T."/>
            <person name="Vitte A.L."/>
            <person name="He T."/>
            <person name="Cheng Z."/>
            <person name="Montellier E."/>
            <person name="Gaucher J."/>
            <person name="Curtet S."/>
            <person name="Debernardi A."/>
            <person name="Charbonnier G."/>
            <person name="Puthier D."/>
            <person name="Petosa C."/>
            <person name="Panne D."/>
            <person name="Rousseaux S."/>
            <person name="Roeder R.G."/>
            <person name="Zhao Y."/>
            <person name="Khochbin S."/>
        </authorList>
    </citation>
    <scope>BUTYRYLATION AT LYS-6 AND LYS-21</scope>
</reference>
<reference key="25">
    <citation type="journal article" date="2016" name="Mol. Cell">
        <title>Metabolic regulation of gene expression by histone lysine beta-hydroxybutyrylation.</title>
        <authorList>
            <person name="Xie Z."/>
            <person name="Zhang D."/>
            <person name="Chung D."/>
            <person name="Tang Z."/>
            <person name="Huang H."/>
            <person name="Dai L."/>
            <person name="Qi S."/>
            <person name="Li J."/>
            <person name="Colak G."/>
            <person name="Chen Y."/>
            <person name="Xia C."/>
            <person name="Peng C."/>
            <person name="Ruan H."/>
            <person name="Kirkey M."/>
            <person name="Wang D."/>
            <person name="Jensen L.M."/>
            <person name="Kwon O.K."/>
            <person name="Lee S."/>
            <person name="Pletcher S.D."/>
            <person name="Tan M."/>
            <person name="Lombard D.B."/>
            <person name="White K.P."/>
            <person name="Zhao H."/>
            <person name="Li J."/>
            <person name="Roeder R.G."/>
            <person name="Yang X."/>
            <person name="Zhao Y."/>
        </authorList>
    </citation>
    <scope>HYDROXYBUTYRYLATION AT LYS-6; LYS-12; LYS-17; LYS-21; LYS-35; LYS-86; LYS-117 AND LYS-121</scope>
</reference>
<reference key="26">
    <citation type="journal article" date="2016" name="Nat. Commun.">
        <title>PARP3 is a sensor of nicked nucleosomes and monoribosylates histone H2B(Glu2).</title>
        <authorList>
            <person name="Grundy G.J."/>
            <person name="Polo L.M."/>
            <person name="Zeng Z."/>
            <person name="Rulten S.L."/>
            <person name="Hoch N.C."/>
            <person name="Paomephan P."/>
            <person name="Xu Y."/>
            <person name="Sweet S.M."/>
            <person name="Thorne A.W."/>
            <person name="Oliver A.W."/>
            <person name="Matthews S.J."/>
            <person name="Pearl L.H."/>
            <person name="Caldecott K.W."/>
        </authorList>
    </citation>
    <scope>ADP-RIBOSYLATION AT GLU-3</scope>
</reference>
<reference key="27">
    <citation type="journal article" date="2019" name="Mol. Cell">
        <title>Glutarylation of histone H4 lysine 91 regulates chromatin dynamics.</title>
        <authorList>
            <person name="Bao X."/>
            <person name="Liu Z."/>
            <person name="Zhang W."/>
            <person name="Gladysz K."/>
            <person name="Fung Y.M.E."/>
            <person name="Tian G."/>
            <person name="Xiong Y."/>
            <person name="Wong J.W.H."/>
            <person name="Yuen K.W.Y."/>
            <person name="Li X.D."/>
        </authorList>
    </citation>
    <scope>GLUTARYLATION AT LYS-17; LYS-35; LYS-44; LYS-47; LYS-109; LYS-117 AND LYS-121</scope>
</reference>
<reference key="28">
    <citation type="journal article" date="2019" name="Nature">
        <title>Metabolic regulation of gene expression by histone lactylation.</title>
        <authorList>
            <person name="Zhang D."/>
            <person name="Tang Z."/>
            <person name="Huang H."/>
            <person name="Zhou G."/>
            <person name="Cui C."/>
            <person name="Weng Y."/>
            <person name="Liu W."/>
            <person name="Kim S."/>
            <person name="Lee S."/>
            <person name="Perez-Neut M."/>
            <person name="Ding J."/>
            <person name="Czyz D."/>
            <person name="Hu R."/>
            <person name="Ye Z."/>
            <person name="He M."/>
            <person name="Zheng Y.G."/>
            <person name="Shuman H.A."/>
            <person name="Dai L."/>
            <person name="Ren B."/>
            <person name="Roeder R.G."/>
            <person name="Becker L."/>
            <person name="Zhao Y."/>
        </authorList>
    </citation>
    <scope>LACTYLATION AT LYS-6; LYS-12; LYS-16; LYS-17; LYS-21; LYS-24; LYS-44; LYS-86; LYS-109; LYS-117 AND LYS-121</scope>
</reference>
<reference key="29">
    <citation type="journal article" date="2021" name="Elife">
        <title>Serine ADP-ribosylation marks nucleosomes for ALC1-dependent chromatin remodeling.</title>
        <authorList>
            <person name="Mohapatra J."/>
            <person name="Tashiro K."/>
            <person name="Beckner R.L."/>
            <person name="Sierra J."/>
            <person name="Kilgore J.A."/>
            <person name="Williams N.S."/>
            <person name="Liszczak G."/>
        </authorList>
    </citation>
    <scope>ADP-RIBOSYLATION AT SER-7</scope>
</reference>
<reference key="30">
    <citation type="journal article" date="2016" name="Nat. Struct. Mol. Biol.">
        <title>Molecular basis and specificity of H2A.Z-H2B recognition and deposition by the histone chaperone YL1.</title>
        <authorList>
            <person name="Latrick C.M."/>
            <person name="Marek M."/>
            <person name="Ouararhni K."/>
            <person name="Papin C."/>
            <person name="Stoll I."/>
            <person name="Ignatyeva M."/>
            <person name="Obri A."/>
            <person name="Ennifar E."/>
            <person name="Dimitrov S."/>
            <person name="Romier C."/>
            <person name="Hamiche A."/>
        </authorList>
    </citation>
    <scope>X-RAY CRYSTALLOGRAPHY (2.70 ANGSTROMS) OF 31-126 IN COMPLEX WITH H2AZ1 AND VPS72</scope>
    <scope>INTERACTION WITH H2AZ1 AND VPS72</scope>
</reference>
<reference evidence="39 40" key="31">
    <citation type="journal article" date="2020" name="Cell Res.">
        <title>Structural basis for nucleosome-mediated inhibition of cGAS activity.</title>
        <authorList>
            <person name="Cao D."/>
            <person name="Han X."/>
            <person name="Fan X."/>
            <person name="Xu R.M."/>
            <person name="Zhang X."/>
        </authorList>
    </citation>
    <scope>STRUCTURE BY ELECTRON MICROSCOPY (3.80 ANGSTROMS) OF 33-125 IN COMPLEX WITH NUCLEOSOME CORE AND CGAS</scope>
</reference>
<reference evidence="37" key="32">
    <citation type="journal article" date="2020" name="PLoS ONE">
        <title>Bridging of nucleosome-proximal DNA double-strand breaks by PARP2 enhances its interaction with HPF1.</title>
        <authorList>
            <person name="Gaullier G."/>
            <person name="Roberts G."/>
            <person name="Muthurajan U.M."/>
            <person name="Bowerman S."/>
            <person name="Rudolph J."/>
            <person name="Mahadevan J."/>
            <person name="Jha A."/>
            <person name="Rae P.S."/>
            <person name="Luger K."/>
        </authorList>
    </citation>
    <scope>STRUCTURE BY ELECTRON MICROSCOPY (10.50 ANGSTROMS) OF NUCLEOSOME CORE COMPLEX IN COMPLEX WITH PARP2</scope>
</reference>
<reference evidence="38" key="33">
    <citation type="journal article" date="2020" name="Science">
        <title>Structural basis for the inhibition of cGAS by nucleosomes.</title>
        <authorList>
            <person name="Kujirai T."/>
            <person name="Zierhut C."/>
            <person name="Takizawa Y."/>
            <person name="Kim R."/>
            <person name="Negishi L."/>
            <person name="Uruma N."/>
            <person name="Hirai S."/>
            <person name="Funabiki H."/>
            <person name="Kurumizaka H."/>
        </authorList>
    </citation>
    <scope>STRUCTURE BY ELECTRON MICROSCOPY (3.90 ANGSTROMS) OF 2-126 IN COMPLEX WITH NUCLEOSOME CORE AND CGAS</scope>
</reference>
<dbReference type="EMBL" id="X00088">
    <property type="protein sequence ID" value="CAA24950.1"/>
    <property type="molecule type" value="Genomic_DNA"/>
</dbReference>
<dbReference type="EMBL" id="AF531293">
    <property type="protein sequence ID" value="AAN06693.1"/>
    <property type="molecule type" value="Genomic_DNA"/>
</dbReference>
<dbReference type="EMBL" id="AK311849">
    <property type="protein sequence ID" value="BAG34791.1"/>
    <property type="molecule type" value="mRNA"/>
</dbReference>
<dbReference type="EMBL" id="AL021807">
    <property type="status" value="NOT_ANNOTATED_CDS"/>
    <property type="molecule type" value="Genomic_DNA"/>
</dbReference>
<dbReference type="EMBL" id="CH471081">
    <property type="protein sequence ID" value="EAX03080.1"/>
    <property type="molecule type" value="Genomic_DNA"/>
</dbReference>
<dbReference type="CCDS" id="CCDS4618.1"/>
<dbReference type="PIR" id="A26318">
    <property type="entry name" value="HSHUB1"/>
</dbReference>
<dbReference type="PIR" id="S65409">
    <property type="entry name" value="S65409"/>
</dbReference>
<dbReference type="RefSeq" id="NP_066402.2">
    <property type="nucleotide sequence ID" value="NM_021058.3"/>
</dbReference>
<dbReference type="PDB" id="2RVQ">
    <property type="method" value="NMR"/>
    <property type="chains" value="D=1-126"/>
</dbReference>
<dbReference type="PDB" id="3A6N">
    <property type="method" value="X-ray"/>
    <property type="resolution" value="2.70 A"/>
    <property type="chains" value="D/H=1-126"/>
</dbReference>
<dbReference type="PDB" id="3AFA">
    <property type="method" value="X-ray"/>
    <property type="resolution" value="2.50 A"/>
    <property type="chains" value="D/H=1-126"/>
</dbReference>
<dbReference type="PDB" id="3AN2">
    <property type="method" value="X-ray"/>
    <property type="resolution" value="3.60 A"/>
    <property type="chains" value="D/H=1-126"/>
</dbReference>
<dbReference type="PDB" id="3AV1">
    <property type="method" value="X-ray"/>
    <property type="resolution" value="2.50 A"/>
    <property type="chains" value="D/H=1-126"/>
</dbReference>
<dbReference type="PDB" id="3AV2">
    <property type="method" value="X-ray"/>
    <property type="resolution" value="2.80 A"/>
    <property type="chains" value="D/H=1-126"/>
</dbReference>
<dbReference type="PDB" id="3AYW">
    <property type="method" value="X-ray"/>
    <property type="resolution" value="2.90 A"/>
    <property type="chains" value="D/H=1-126"/>
</dbReference>
<dbReference type="PDB" id="3AZE">
    <property type="method" value="X-ray"/>
    <property type="resolution" value="3.00 A"/>
    <property type="chains" value="D/H=1-126"/>
</dbReference>
<dbReference type="PDB" id="3AZF">
    <property type="method" value="X-ray"/>
    <property type="resolution" value="2.70 A"/>
    <property type="chains" value="D/H=1-126"/>
</dbReference>
<dbReference type="PDB" id="3AZG">
    <property type="method" value="X-ray"/>
    <property type="resolution" value="2.40 A"/>
    <property type="chains" value="D/H=1-126"/>
</dbReference>
<dbReference type="PDB" id="3AZH">
    <property type="method" value="X-ray"/>
    <property type="resolution" value="3.49 A"/>
    <property type="chains" value="D/H=1-126"/>
</dbReference>
<dbReference type="PDB" id="3AZI">
    <property type="method" value="X-ray"/>
    <property type="resolution" value="2.70 A"/>
    <property type="chains" value="D/H=1-126"/>
</dbReference>
<dbReference type="PDB" id="3AZJ">
    <property type="method" value="X-ray"/>
    <property type="resolution" value="2.89 A"/>
    <property type="chains" value="D/H=1-126"/>
</dbReference>
<dbReference type="PDB" id="3AZK">
    <property type="method" value="X-ray"/>
    <property type="resolution" value="3.20 A"/>
    <property type="chains" value="D/H=1-126"/>
</dbReference>
<dbReference type="PDB" id="3AZL">
    <property type="method" value="X-ray"/>
    <property type="resolution" value="2.70 A"/>
    <property type="chains" value="D/H=1-126"/>
</dbReference>
<dbReference type="PDB" id="3AZM">
    <property type="method" value="X-ray"/>
    <property type="resolution" value="2.89 A"/>
    <property type="chains" value="D/H=1-126"/>
</dbReference>
<dbReference type="PDB" id="3AZN">
    <property type="method" value="X-ray"/>
    <property type="resolution" value="3.00 A"/>
    <property type="chains" value="D/H=1-126"/>
</dbReference>
<dbReference type="PDB" id="3W96">
    <property type="method" value="X-ray"/>
    <property type="resolution" value="3.00 A"/>
    <property type="chains" value="D/H=1-126"/>
</dbReference>
<dbReference type="PDB" id="3W97">
    <property type="method" value="X-ray"/>
    <property type="resolution" value="3.20 A"/>
    <property type="chains" value="D/H=26-126"/>
</dbReference>
<dbReference type="PDB" id="3W98">
    <property type="method" value="X-ray"/>
    <property type="resolution" value="3.42 A"/>
    <property type="chains" value="D/H=1-126"/>
</dbReference>
<dbReference type="PDB" id="3W99">
    <property type="method" value="X-ray"/>
    <property type="resolution" value="3.00 A"/>
    <property type="chains" value="D/H=1-126"/>
</dbReference>
<dbReference type="PDB" id="3WA9">
    <property type="method" value="X-ray"/>
    <property type="resolution" value="3.07 A"/>
    <property type="chains" value="D/H=1-126"/>
</dbReference>
<dbReference type="PDB" id="3WAA">
    <property type="method" value="X-ray"/>
    <property type="resolution" value="3.20 A"/>
    <property type="chains" value="D/H=1-126"/>
</dbReference>
<dbReference type="PDB" id="3WTP">
    <property type="method" value="X-ray"/>
    <property type="resolution" value="2.67 A"/>
    <property type="chains" value="D/H=1-126"/>
</dbReference>
<dbReference type="PDB" id="4CAY">
    <property type="method" value="X-ray"/>
    <property type="resolution" value="1.48 A"/>
    <property type="chains" value="B=31-126"/>
</dbReference>
<dbReference type="PDB" id="4YM5">
    <property type="method" value="X-ray"/>
    <property type="resolution" value="4.00 A"/>
    <property type="chains" value="D/H=1-126"/>
</dbReference>
<dbReference type="PDB" id="4YM6">
    <property type="method" value="X-ray"/>
    <property type="resolution" value="3.51 A"/>
    <property type="chains" value="D/H=1-126"/>
</dbReference>
<dbReference type="PDB" id="4Z5T">
    <property type="method" value="X-ray"/>
    <property type="resolution" value="2.80 A"/>
    <property type="chains" value="D/H=1-126"/>
</dbReference>
<dbReference type="PDB" id="5AV5">
    <property type="method" value="X-ray"/>
    <property type="resolution" value="2.40 A"/>
    <property type="chains" value="D/H=1-126"/>
</dbReference>
<dbReference type="PDB" id="5AV6">
    <property type="method" value="X-ray"/>
    <property type="resolution" value="2.20 A"/>
    <property type="chains" value="D/H=1-126"/>
</dbReference>
<dbReference type="PDB" id="5AV8">
    <property type="method" value="X-ray"/>
    <property type="resolution" value="2.20 A"/>
    <property type="chains" value="D/H=1-126"/>
</dbReference>
<dbReference type="PDB" id="5AV9">
    <property type="method" value="X-ray"/>
    <property type="resolution" value="2.20 A"/>
    <property type="chains" value="D/H=1-126"/>
</dbReference>
<dbReference type="PDB" id="5AVB">
    <property type="method" value="X-ray"/>
    <property type="resolution" value="2.40 A"/>
    <property type="chains" value="D/H=1-126"/>
</dbReference>
<dbReference type="PDB" id="5AVC">
    <property type="method" value="X-ray"/>
    <property type="resolution" value="2.40 A"/>
    <property type="chains" value="D/H=1-126"/>
</dbReference>
<dbReference type="PDB" id="5AY8">
    <property type="method" value="X-ray"/>
    <property type="resolution" value="2.80 A"/>
    <property type="chains" value="D/H=1-126"/>
</dbReference>
<dbReference type="PDB" id="5B0Y">
    <property type="method" value="X-ray"/>
    <property type="resolution" value="2.56 A"/>
    <property type="chains" value="D/H=1-126"/>
</dbReference>
<dbReference type="PDB" id="5B0Z">
    <property type="method" value="X-ray"/>
    <property type="resolution" value="1.99 A"/>
    <property type="chains" value="D/H=1-126"/>
</dbReference>
<dbReference type="PDB" id="5B24">
    <property type="method" value="X-ray"/>
    <property type="resolution" value="3.60 A"/>
    <property type="chains" value="D/H=1-126"/>
</dbReference>
<dbReference type="PDB" id="5B2I">
    <property type="method" value="X-ray"/>
    <property type="resolution" value="3.00 A"/>
    <property type="chains" value="D/H=1-126"/>
</dbReference>
<dbReference type="PDB" id="5B2J">
    <property type="method" value="X-ray"/>
    <property type="resolution" value="2.60 A"/>
    <property type="chains" value="D/H=1-126"/>
</dbReference>
<dbReference type="PDB" id="5B31">
    <property type="method" value="X-ray"/>
    <property type="resolution" value="2.20 A"/>
    <property type="chains" value="D/H=1-126"/>
</dbReference>
<dbReference type="PDB" id="5B32">
    <property type="method" value="X-ray"/>
    <property type="resolution" value="2.35 A"/>
    <property type="chains" value="D/H=1-126"/>
</dbReference>
<dbReference type="PDB" id="5B33">
    <property type="method" value="X-ray"/>
    <property type="resolution" value="2.92 A"/>
    <property type="chains" value="D/H=1-126"/>
</dbReference>
<dbReference type="PDB" id="5B40">
    <property type="method" value="X-ray"/>
    <property type="resolution" value="3.33 A"/>
    <property type="chains" value="D/H=1-126"/>
</dbReference>
<dbReference type="PDB" id="5CPI">
    <property type="method" value="X-ray"/>
    <property type="resolution" value="2.90 A"/>
    <property type="chains" value="D/H=1-126"/>
</dbReference>
<dbReference type="PDB" id="5CPJ">
    <property type="method" value="X-ray"/>
    <property type="resolution" value="3.15 A"/>
    <property type="chains" value="D/H=1-126"/>
</dbReference>
<dbReference type="PDB" id="5CPK">
    <property type="method" value="X-ray"/>
    <property type="resolution" value="2.63 A"/>
    <property type="chains" value="D/H=1-126"/>
</dbReference>
<dbReference type="PDB" id="5FUG">
    <property type="method" value="X-ray"/>
    <property type="resolution" value="2.70 A"/>
    <property type="chains" value="B/E/H/K=31-126"/>
</dbReference>
<dbReference type="PDB" id="5GSE">
    <property type="method" value="X-ray"/>
    <property type="resolution" value="3.14 A"/>
    <property type="chains" value="D/H/N=1-126"/>
</dbReference>
<dbReference type="PDB" id="5GTC">
    <property type="method" value="X-ray"/>
    <property type="resolution" value="2.70 A"/>
    <property type="chains" value="D/H=1-126"/>
</dbReference>
<dbReference type="PDB" id="5GXQ">
    <property type="method" value="X-ray"/>
    <property type="resolution" value="2.85 A"/>
    <property type="chains" value="D/H=1-126"/>
</dbReference>
<dbReference type="PDB" id="5JRG">
    <property type="method" value="X-ray"/>
    <property type="resolution" value="2.50 A"/>
    <property type="chains" value="D/H=1-126"/>
</dbReference>
<dbReference type="PDB" id="5VEY">
    <property type="method" value="NMR"/>
    <property type="chains" value="A=34-124"/>
</dbReference>
<dbReference type="PDB" id="5X7X">
    <property type="method" value="X-ray"/>
    <property type="resolution" value="2.18 A"/>
    <property type="chains" value="D/H=1-126"/>
</dbReference>
<dbReference type="PDB" id="5XF3">
    <property type="method" value="X-ray"/>
    <property type="resolution" value="2.60 A"/>
    <property type="chains" value="D/H=1-126"/>
</dbReference>
<dbReference type="PDB" id="5XF4">
    <property type="method" value="X-ray"/>
    <property type="resolution" value="2.87 A"/>
    <property type="chains" value="D/H=1-126"/>
</dbReference>
<dbReference type="PDB" id="5XF5">
    <property type="method" value="X-ray"/>
    <property type="resolution" value="2.82 A"/>
    <property type="chains" value="D/H=1-126"/>
</dbReference>
<dbReference type="PDB" id="5Y0C">
    <property type="method" value="X-ray"/>
    <property type="resolution" value="2.09 A"/>
    <property type="chains" value="D/H=1-126"/>
</dbReference>
<dbReference type="PDB" id="5Y0D">
    <property type="method" value="X-ray"/>
    <property type="resolution" value="1.99 A"/>
    <property type="chains" value="D/H=1-126"/>
</dbReference>
<dbReference type="PDB" id="5Z23">
    <property type="method" value="X-ray"/>
    <property type="resolution" value="2.73 A"/>
    <property type="chains" value="D/H=1-126"/>
</dbReference>
<dbReference type="PDB" id="5Z30">
    <property type="method" value="X-ray"/>
    <property type="resolution" value="2.45 A"/>
    <property type="chains" value="D/H=1-126"/>
</dbReference>
<dbReference type="PDB" id="5ZBX">
    <property type="method" value="X-ray"/>
    <property type="resolution" value="2.58 A"/>
    <property type="chains" value="D/H=1-126"/>
</dbReference>
<dbReference type="PDB" id="6A5L">
    <property type="method" value="EM"/>
    <property type="resolution" value="5.60 A"/>
    <property type="chains" value="d/h=1-126"/>
</dbReference>
<dbReference type="PDB" id="6A5O">
    <property type="method" value="EM"/>
    <property type="resolution" value="9.90 A"/>
    <property type="chains" value="d/h=1-126"/>
</dbReference>
<dbReference type="PDB" id="6A5P">
    <property type="method" value="EM"/>
    <property type="resolution" value="7.00 A"/>
    <property type="chains" value="d/h=1-126"/>
</dbReference>
<dbReference type="PDB" id="6A5R">
    <property type="method" value="EM"/>
    <property type="resolution" value="8.70 A"/>
    <property type="chains" value="d/h=1-126"/>
</dbReference>
<dbReference type="PDB" id="6A5T">
    <property type="method" value="EM"/>
    <property type="resolution" value="6.70 A"/>
    <property type="chains" value="d/h=1-126"/>
</dbReference>
<dbReference type="PDB" id="6A5U">
    <property type="method" value="EM"/>
    <property type="resolution" value="7.60 A"/>
    <property type="chains" value="d/h=1-126"/>
</dbReference>
<dbReference type="PDB" id="6BUZ">
    <property type="method" value="EM"/>
    <property type="resolution" value="3.92 A"/>
    <property type="chains" value="D/H=1-126"/>
</dbReference>
<dbReference type="PDB" id="6E0C">
    <property type="method" value="EM"/>
    <property type="resolution" value="2.63 A"/>
    <property type="chains" value="D/H=1-126"/>
</dbReference>
<dbReference type="PDB" id="6E0P">
    <property type="method" value="EM"/>
    <property type="resolution" value="2.60 A"/>
    <property type="chains" value="D/H=1-126"/>
</dbReference>
<dbReference type="PDB" id="6HKT">
    <property type="method" value="X-ray"/>
    <property type="resolution" value="9.70 A"/>
    <property type="chains" value="1/3/D/H/N/R/X/d/h/n/r/x=1-126"/>
</dbReference>
<dbReference type="PDB" id="6HTS">
    <property type="method" value="EM"/>
    <property type="resolution" value="4.80 A"/>
    <property type="chains" value="L/P=1-126"/>
</dbReference>
<dbReference type="PDB" id="6INQ">
    <property type="method" value="EM"/>
    <property type="resolution" value="6.90 A"/>
    <property type="chains" value="d/h=1-126"/>
</dbReference>
<dbReference type="PDB" id="6IPU">
    <property type="method" value="X-ray"/>
    <property type="resolution" value="1.99 A"/>
    <property type="chains" value="D/H=32-126"/>
</dbReference>
<dbReference type="PDB" id="6IQ4">
    <property type="method" value="X-ray"/>
    <property type="resolution" value="2.25 A"/>
    <property type="chains" value="D/H=32-126"/>
</dbReference>
<dbReference type="PDB" id="6IR9">
    <property type="method" value="EM"/>
    <property type="resolution" value="3.80 A"/>
    <property type="chains" value="d/h=1-126"/>
</dbReference>
<dbReference type="PDB" id="6J4W">
    <property type="method" value="EM"/>
    <property type="resolution" value="7.90 A"/>
    <property type="chains" value="d/h=1-126"/>
</dbReference>
<dbReference type="PDB" id="6J4X">
    <property type="method" value="EM"/>
    <property type="resolution" value="4.30 A"/>
    <property type="chains" value="d/h=1-126"/>
</dbReference>
<dbReference type="PDB" id="6J4Y">
    <property type="method" value="EM"/>
    <property type="resolution" value="4.30 A"/>
    <property type="chains" value="d/h=1-126"/>
</dbReference>
<dbReference type="PDB" id="6J4Z">
    <property type="method" value="EM"/>
    <property type="resolution" value="4.10 A"/>
    <property type="chains" value="d/h=1-126"/>
</dbReference>
<dbReference type="PDB" id="6J50">
    <property type="method" value="EM"/>
    <property type="resolution" value="4.70 A"/>
    <property type="chains" value="d/h=1-126"/>
</dbReference>
<dbReference type="PDB" id="6J51">
    <property type="method" value="EM"/>
    <property type="resolution" value="4.20 A"/>
    <property type="chains" value="d/h=1-126"/>
</dbReference>
<dbReference type="PDB" id="6JOU">
    <property type="method" value="X-ray"/>
    <property type="resolution" value="2.17 A"/>
    <property type="chains" value="D/H=1-126"/>
</dbReference>
<dbReference type="PDB" id="6JR0">
    <property type="method" value="X-ray"/>
    <property type="resolution" value="2.50 A"/>
    <property type="chains" value="D/H=1-126"/>
</dbReference>
<dbReference type="PDB" id="6JR1">
    <property type="method" value="X-ray"/>
    <property type="resolution" value="2.40 A"/>
    <property type="chains" value="D/H=1-126"/>
</dbReference>
<dbReference type="PDB" id="6JXD">
    <property type="method" value="X-ray"/>
    <property type="resolution" value="2.25 A"/>
    <property type="chains" value="D/H=30-126"/>
</dbReference>
<dbReference type="PDB" id="6K1I">
    <property type="method" value="X-ray"/>
    <property type="resolution" value="2.75 A"/>
    <property type="chains" value="D/H=1-126"/>
</dbReference>
<dbReference type="PDB" id="6K1J">
    <property type="method" value="X-ray"/>
    <property type="resolution" value="2.85 A"/>
    <property type="chains" value="D/H=1-126"/>
</dbReference>
<dbReference type="PDB" id="6K1K">
    <property type="method" value="X-ray"/>
    <property type="resolution" value="2.20 A"/>
    <property type="chains" value="D/H=1-126"/>
</dbReference>
<dbReference type="PDB" id="6KVD">
    <property type="method" value="X-ray"/>
    <property type="resolution" value="2.21 A"/>
    <property type="chains" value="D/H=1-126"/>
</dbReference>
<dbReference type="PDB" id="6KXV">
    <property type="method" value="X-ray"/>
    <property type="resolution" value="3.63 A"/>
    <property type="chains" value="D/H=1-126"/>
</dbReference>
<dbReference type="PDB" id="6L49">
    <property type="method" value="EM"/>
    <property type="resolution" value="18.90 A"/>
    <property type="chains" value="D/H/N/R/V/Z=1-126"/>
</dbReference>
<dbReference type="PDB" id="6L4A">
    <property type="method" value="EM"/>
    <property type="resolution" value="12.30 A"/>
    <property type="chains" value="D/H/N/R/V/Z=1-126"/>
</dbReference>
<dbReference type="PDB" id="6L9Z">
    <property type="method" value="X-ray"/>
    <property type="resolution" value="2.50 A"/>
    <property type="chains" value="D/H/N/R=1-126"/>
</dbReference>
<dbReference type="PDB" id="6LA2">
    <property type="method" value="X-ray"/>
    <property type="resolution" value="3.89 A"/>
    <property type="chains" value="D/H/N/R/X/b/h/l=1-126"/>
</dbReference>
<dbReference type="PDB" id="6LA8">
    <property type="method" value="X-ray"/>
    <property type="resolution" value="3.40 A"/>
    <property type="chains" value="D/H/N/R=1-126"/>
</dbReference>
<dbReference type="PDB" id="6LA9">
    <property type="method" value="X-ray"/>
    <property type="resolution" value="3.70 A"/>
    <property type="chains" value="D/H/N/R=1-126"/>
</dbReference>
<dbReference type="PDB" id="6LAB">
    <property type="method" value="X-ray"/>
    <property type="resolution" value="3.20 A"/>
    <property type="chains" value="D/H/N/R=1-126"/>
</dbReference>
<dbReference type="PDB" id="6LER">
    <property type="method" value="X-ray"/>
    <property type="resolution" value="3.00 A"/>
    <property type="chains" value="D/H/N/R=1-126"/>
</dbReference>
<dbReference type="PDB" id="6M3V">
    <property type="method" value="X-ray"/>
    <property type="resolution" value="4.60 A"/>
    <property type="chains" value="D/H/N/R=1-126"/>
</dbReference>
<dbReference type="PDB" id="6M44">
    <property type="method" value="X-ray"/>
    <property type="resolution" value="3.81 A"/>
    <property type="chains" value="D/H/N/R=1-126"/>
</dbReference>
<dbReference type="PDB" id="6O1D">
    <property type="method" value="EM"/>
    <property type="resolution" value="3.40 A"/>
    <property type="chains" value="D/H=1-126"/>
</dbReference>
<dbReference type="PDB" id="6R8Y">
    <property type="method" value="EM"/>
    <property type="resolution" value="4.30 A"/>
    <property type="chains" value="D/H=1-126"/>
</dbReference>
<dbReference type="PDB" id="6R8Z">
    <property type="method" value="EM"/>
    <property type="resolution" value="3.90 A"/>
    <property type="chains" value="D/H=1-126"/>
</dbReference>
<dbReference type="PDB" id="6R90">
    <property type="method" value="EM"/>
    <property type="resolution" value="4.50 A"/>
    <property type="chains" value="D/H=1-126"/>
</dbReference>
<dbReference type="PDB" id="6R91">
    <property type="method" value="EM"/>
    <property type="resolution" value="4.10 A"/>
    <property type="chains" value="D/H=1-126"/>
</dbReference>
<dbReference type="PDB" id="6R92">
    <property type="method" value="EM"/>
    <property type="resolution" value="4.80 A"/>
    <property type="chains" value="D/H=1-126"/>
</dbReference>
<dbReference type="PDB" id="6R93">
    <property type="method" value="EM"/>
    <property type="resolution" value="4.00 A"/>
    <property type="chains" value="D/H=1-126"/>
</dbReference>
<dbReference type="PDB" id="6R94">
    <property type="method" value="EM"/>
    <property type="resolution" value="3.50 A"/>
    <property type="chains" value="D/H=1-126"/>
</dbReference>
<dbReference type="PDB" id="6T90">
    <property type="method" value="EM"/>
    <property type="resolution" value="3.05 A"/>
    <property type="chains" value="D/H=1-125"/>
</dbReference>
<dbReference type="PDB" id="6T93">
    <property type="method" value="EM"/>
    <property type="resolution" value="3.49 A"/>
    <property type="chains" value="D/H=1-126"/>
</dbReference>
<dbReference type="PDB" id="6USJ">
    <property type="method" value="EM"/>
    <property type="resolution" value="10.50 A"/>
    <property type="chains" value="D/H/N/R=1-126"/>
</dbReference>
<dbReference type="PDB" id="6V2K">
    <property type="method" value="X-ray"/>
    <property type="resolution" value="2.60 A"/>
    <property type="chains" value="D/H=1-126"/>
</dbReference>
<dbReference type="PDB" id="6YOV">
    <property type="method" value="EM"/>
    <property type="resolution" value="3.42 A"/>
    <property type="chains" value="D/H=1-125"/>
</dbReference>
<dbReference type="PDB" id="7BY0">
    <property type="method" value="EM"/>
    <property type="resolution" value="4.50 A"/>
    <property type="chains" value="D/H=1-126"/>
</dbReference>
<dbReference type="PDB" id="7C0M">
    <property type="method" value="EM"/>
    <property type="resolution" value="3.90 A"/>
    <property type="chains" value="D/H/d/h=2-126"/>
</dbReference>
<dbReference type="PDB" id="7CCQ">
    <property type="method" value="EM"/>
    <property type="resolution" value="3.80 A"/>
    <property type="chains" value="D/H=33-125"/>
</dbReference>
<dbReference type="PDB" id="7CCR">
    <property type="method" value="EM"/>
    <property type="resolution" value="4.90 A"/>
    <property type="chains" value="D/H/O/S=33-125"/>
</dbReference>
<dbReference type="PDB" id="7COW">
    <property type="method" value="X-ray"/>
    <property type="resolution" value="2.86 A"/>
    <property type="chains" value="D/H/N/R=1-126"/>
</dbReference>
<dbReference type="PDB" id="7D1Z">
    <property type="method" value="EM"/>
    <property type="resolution" value="3.15 A"/>
    <property type="chains" value="D/H=2-126"/>
</dbReference>
<dbReference type="PDB" id="7D20">
    <property type="method" value="EM"/>
    <property type="resolution" value="3.00 A"/>
    <property type="chains" value="D/H=2-126"/>
</dbReference>
<dbReference type="PDB" id="7E8D">
    <property type="method" value="EM"/>
    <property type="resolution" value="2.80 A"/>
    <property type="chains" value="D/H=2-126"/>
</dbReference>
<dbReference type="PDB" id="7K5X">
    <property type="method" value="EM"/>
    <property type="resolution" value="2.93 A"/>
    <property type="chains" value="D/H=1-126"/>
</dbReference>
<dbReference type="PDB" id="7K5Y">
    <property type="method" value="EM"/>
    <property type="resolution" value="2.76 A"/>
    <property type="chains" value="D/H=1-126"/>
</dbReference>
<dbReference type="PDB" id="7K60">
    <property type="method" value="EM"/>
    <property type="resolution" value="3.12 A"/>
    <property type="chains" value="D/H=1-126"/>
</dbReference>
<dbReference type="PDB" id="7K61">
    <property type="method" value="EM"/>
    <property type="resolution" value="2.85 A"/>
    <property type="chains" value="D/H=1-126"/>
</dbReference>
<dbReference type="PDB" id="7K63">
    <property type="method" value="EM"/>
    <property type="resolution" value="3.03 A"/>
    <property type="chains" value="D/H=1-126"/>
</dbReference>
<dbReference type="PDB" id="7LYA">
    <property type="method" value="EM"/>
    <property type="resolution" value="2.91 A"/>
    <property type="chains" value="D/H=1-124"/>
</dbReference>
<dbReference type="PDB" id="7LYB">
    <property type="method" value="EM"/>
    <property type="resolution" value="3.28 A"/>
    <property type="chains" value="D/H=1-124"/>
</dbReference>
<dbReference type="PDB" id="7LYC">
    <property type="method" value="EM"/>
    <property type="resolution" value="2.94 A"/>
    <property type="chains" value="D/H=1-124"/>
</dbReference>
<dbReference type="PDB" id="7NL0">
    <property type="method" value="EM"/>
    <property type="resolution" value="3.50 A"/>
    <property type="chains" value="D/H=1-126"/>
</dbReference>
<dbReference type="PDB" id="7SCY">
    <property type="method" value="EM"/>
    <property type="resolution" value="4.10 A"/>
    <property type="chains" value="D/H=1-126"/>
</dbReference>
<dbReference type="PDB" id="7SCZ">
    <property type="method" value="EM"/>
    <property type="resolution" value="3.50 A"/>
    <property type="chains" value="D/H=1-126"/>
</dbReference>
<dbReference type="PDB" id="7VCL">
    <property type="method" value="X-ray"/>
    <property type="resolution" value="3.20 A"/>
    <property type="chains" value="A=28-126"/>
</dbReference>
<dbReference type="PDB" id="7VZ4">
    <property type="method" value="EM"/>
    <property type="resolution" value="1.89 A"/>
    <property type="chains" value="D/H=2-126"/>
</dbReference>
<dbReference type="PDB" id="7W9V">
    <property type="method" value="EM"/>
    <property type="resolution" value="3.95 A"/>
    <property type="chains" value="D/H=1-126"/>
</dbReference>
<dbReference type="PDB" id="7WBV">
    <property type="method" value="EM"/>
    <property type="resolution" value="4.10 A"/>
    <property type="chains" value="d/h=2-126"/>
</dbReference>
<dbReference type="PDB" id="7WBW">
    <property type="method" value="EM"/>
    <property type="resolution" value="7.10 A"/>
    <property type="chains" value="d/h=2-126"/>
</dbReference>
<dbReference type="PDB" id="7WBX">
    <property type="method" value="EM"/>
    <property type="resolution" value="4.00 A"/>
    <property type="chains" value="d/h=2-126"/>
</dbReference>
<dbReference type="PDB" id="7XSE">
    <property type="method" value="EM"/>
    <property type="resolution" value="3.60 A"/>
    <property type="chains" value="d/h=1-126"/>
</dbReference>
<dbReference type="PDB" id="7XSX">
    <property type="method" value="EM"/>
    <property type="resolution" value="3.80 A"/>
    <property type="chains" value="d/h=1-126"/>
</dbReference>
<dbReference type="PDB" id="7XSZ">
    <property type="method" value="EM"/>
    <property type="resolution" value="3.40 A"/>
    <property type="chains" value="d/h=1-126"/>
</dbReference>
<dbReference type="PDB" id="7XT7">
    <property type="method" value="EM"/>
    <property type="resolution" value="4.20 A"/>
    <property type="chains" value="d/h=1-126"/>
</dbReference>
<dbReference type="PDB" id="7XTD">
    <property type="method" value="EM"/>
    <property type="resolution" value="3.90 A"/>
    <property type="chains" value="d/h=1-126"/>
</dbReference>
<dbReference type="PDB" id="7XTI">
    <property type="method" value="EM"/>
    <property type="resolution" value="3.90 A"/>
    <property type="chains" value="h=1-126"/>
</dbReference>
<dbReference type="PDB" id="7XVL">
    <property type="method" value="X-ray"/>
    <property type="resolution" value="3.51 A"/>
    <property type="chains" value="D/H/N/R/X/b/h/l=1-126"/>
</dbReference>
<dbReference type="PDB" id="7XVM">
    <property type="method" value="X-ray"/>
    <property type="resolution" value="2.84 A"/>
    <property type="chains" value="D/H/N/R=1-126"/>
</dbReference>
<dbReference type="PDB" id="7XX5">
    <property type="method" value="X-ray"/>
    <property type="resolution" value="3.19 A"/>
    <property type="chains" value="D/H/N/R=1-126"/>
</dbReference>
<dbReference type="PDB" id="7XX6">
    <property type="method" value="X-ray"/>
    <property type="resolution" value="3.39 A"/>
    <property type="chains" value="D/H/N/R/X/b/h/l=1-126"/>
</dbReference>
<dbReference type="PDB" id="7XZX">
    <property type="method" value="EM"/>
    <property type="resolution" value="4.53 A"/>
    <property type="chains" value="D/H=1-126"/>
</dbReference>
<dbReference type="PDB" id="7XZY">
    <property type="method" value="EM"/>
    <property type="resolution" value="3.97 A"/>
    <property type="chains" value="D/H=1-126"/>
</dbReference>
<dbReference type="PDB" id="7XZZ">
    <property type="method" value="EM"/>
    <property type="resolution" value="4.07 A"/>
    <property type="chains" value="D/H=1-126"/>
</dbReference>
<dbReference type="PDB" id="7Y00">
    <property type="method" value="EM"/>
    <property type="resolution" value="3.96 A"/>
    <property type="chains" value="D/H=1-126"/>
</dbReference>
<dbReference type="PDB" id="7Y7I">
    <property type="method" value="EM"/>
    <property type="resolution" value="3.42 A"/>
    <property type="chains" value="D/H=1-126"/>
</dbReference>
<dbReference type="PDB" id="7YRD">
    <property type="method" value="EM"/>
    <property type="resolution" value="3.20 A"/>
    <property type="chains" value="D/H=34-126"/>
</dbReference>
<dbReference type="PDB" id="7ZI4">
    <property type="method" value="EM"/>
    <property type="resolution" value="3.20 A"/>
    <property type="chains" value="L/P=1-126"/>
</dbReference>
<dbReference type="PDB" id="8G57">
    <property type="method" value="EM"/>
    <property type="resolution" value="3.07 A"/>
    <property type="chains" value="D/H=2-126"/>
</dbReference>
<dbReference type="PDB" id="8GUI">
    <property type="method" value="EM"/>
    <property type="resolution" value="2.81 A"/>
    <property type="chains" value="D/H=1-126"/>
</dbReference>
<dbReference type="PDB" id="8GUJ">
    <property type="method" value="EM"/>
    <property type="resolution" value="2.80 A"/>
    <property type="chains" value="D/H=1-126"/>
</dbReference>
<dbReference type="PDB" id="8GUK">
    <property type="method" value="EM"/>
    <property type="resolution" value="2.51 A"/>
    <property type="chains" value="D/H=1-126"/>
</dbReference>
<dbReference type="PDB" id="8H0V">
    <property type="method" value="EM"/>
    <property type="resolution" value="3.80 A"/>
    <property type="chains" value="d/h=1-126"/>
</dbReference>
<dbReference type="PDB" id="8H0W">
    <property type="method" value="EM"/>
    <property type="resolution" value="4.60 A"/>
    <property type="chains" value="d/h=1-126"/>
</dbReference>
<dbReference type="PDB" id="8HAG">
    <property type="method" value="EM"/>
    <property type="resolution" value="3.20 A"/>
    <property type="chains" value="D/H=1-126"/>
</dbReference>
<dbReference type="PDB" id="8HAH">
    <property type="method" value="EM"/>
    <property type="resolution" value="3.90 A"/>
    <property type="chains" value="D/H=2-126"/>
</dbReference>
<dbReference type="PDB" id="8HAI">
    <property type="method" value="EM"/>
    <property type="resolution" value="4.70 A"/>
    <property type="chains" value="D/H=2-126"/>
</dbReference>
<dbReference type="PDB" id="8HAJ">
    <property type="method" value="EM"/>
    <property type="resolution" value="4.80 A"/>
    <property type="chains" value="D/H=2-126"/>
</dbReference>
<dbReference type="PDB" id="8HAK">
    <property type="method" value="EM"/>
    <property type="resolution" value="4.50 A"/>
    <property type="chains" value="D/H=2-126"/>
</dbReference>
<dbReference type="PDB" id="8HAL">
    <property type="method" value="EM"/>
    <property type="resolution" value="4.40 A"/>
    <property type="chains" value="D/H=2-126"/>
</dbReference>
<dbReference type="PDB" id="8HAM">
    <property type="method" value="EM"/>
    <property type="resolution" value="4.50 A"/>
    <property type="chains" value="D/H=2-126"/>
</dbReference>
<dbReference type="PDB" id="8HAN">
    <property type="method" value="EM"/>
    <property type="resolution" value="4.20 A"/>
    <property type="chains" value="D/H=2-126"/>
</dbReference>
<dbReference type="PDB" id="8HE5">
    <property type="method" value="EM"/>
    <property type="resolution" value="6.95 A"/>
    <property type="chains" value="d/h=1-126"/>
</dbReference>
<dbReference type="PDB" id="8I17">
    <property type="method" value="X-ray"/>
    <property type="resolution" value="1.98 A"/>
    <property type="chains" value="B/E/H=28-126"/>
</dbReference>
<dbReference type="PDB" id="8IHL">
    <property type="method" value="EM"/>
    <property type="resolution" value="7.64 A"/>
    <property type="chains" value="D/H/P/T=1-126"/>
</dbReference>
<dbReference type="PDB" id="8JH2">
    <property type="method" value="EM"/>
    <property type="resolution" value="5.70 A"/>
    <property type="chains" value="d/h=1-126"/>
</dbReference>
<dbReference type="PDB" id="8JH3">
    <property type="method" value="EM"/>
    <property type="resolution" value="3.70 A"/>
    <property type="chains" value="d/h=1-126"/>
</dbReference>
<dbReference type="PDB" id="8JH4">
    <property type="method" value="EM"/>
    <property type="resolution" value="3.20 A"/>
    <property type="chains" value="d/h=1-126"/>
</dbReference>
<dbReference type="PDB" id="8JL9">
    <property type="method" value="EM"/>
    <property type="resolution" value="2.65 A"/>
    <property type="chains" value="D/H=1-126"/>
</dbReference>
<dbReference type="PDB" id="8JLA">
    <property type="method" value="EM"/>
    <property type="resolution" value="3.44 A"/>
    <property type="chains" value="D/H=26-126"/>
</dbReference>
<dbReference type="PDB" id="8JLB">
    <property type="method" value="EM"/>
    <property type="resolution" value="2.36 A"/>
    <property type="chains" value="D/H=1-126"/>
</dbReference>
<dbReference type="PDB" id="8JLD">
    <property type="method" value="EM"/>
    <property type="resolution" value="2.48 A"/>
    <property type="chains" value="D/H=1-126"/>
</dbReference>
<dbReference type="PDB" id="8JND">
    <property type="method" value="EM"/>
    <property type="resolution" value="3.66 A"/>
    <property type="chains" value="D/H=1-126"/>
</dbReference>
<dbReference type="PDB" id="8JNE">
    <property type="method" value="EM"/>
    <property type="resolution" value="4.68 A"/>
    <property type="chains" value="D/H=1-126"/>
</dbReference>
<dbReference type="PDB" id="8JNF">
    <property type="method" value="EM"/>
    <property type="resolution" value="6.91 A"/>
    <property type="chains" value="D/H=1-126"/>
</dbReference>
<dbReference type="PDB" id="8KB5">
    <property type="method" value="EM"/>
    <property type="resolution" value="2.26 A"/>
    <property type="chains" value="D/H=1-126"/>
</dbReference>
<dbReference type="PDB" id="8KCY">
    <property type="method" value="EM"/>
    <property type="resolution" value="2.80 A"/>
    <property type="chains" value="D/H=1-126"/>
</dbReference>
<dbReference type="PDB" id="8KD1">
    <property type="method" value="EM"/>
    <property type="resolution" value="3.20 A"/>
    <property type="chains" value="D/H=1-126"/>
</dbReference>
<dbReference type="PDB" id="8KE0">
    <property type="method" value="EM"/>
    <property type="resolution" value="4.00 A"/>
    <property type="chains" value="D/H=1-126"/>
</dbReference>
<dbReference type="PDB" id="8OSJ">
    <property type="method" value="EM"/>
    <property type="resolution" value="6.20 A"/>
    <property type="chains" value="D/H=1-125"/>
</dbReference>
<dbReference type="PDB" id="8OSK">
    <property type="method" value="EM"/>
    <property type="resolution" value="3.60 A"/>
    <property type="chains" value="D/H=1-125"/>
</dbReference>
<dbReference type="PDB" id="8OSL">
    <property type="method" value="EM"/>
    <property type="resolution" value="4.90 A"/>
    <property type="chains" value="D/H=1-125"/>
</dbReference>
<dbReference type="PDB" id="8OTS">
    <property type="method" value="EM"/>
    <property type="resolution" value="3.30 A"/>
    <property type="chains" value="D/H=1-125"/>
</dbReference>
<dbReference type="PDB" id="8OTT">
    <property type="method" value="EM"/>
    <property type="resolution" value="3.30 A"/>
    <property type="chains" value="D/H=33-125"/>
</dbReference>
<dbReference type="PDB" id="8QKT">
    <property type="method" value="X-ray"/>
    <property type="resolution" value="3.26 A"/>
    <property type="chains" value="DDD/NNN=30-125, HHH/RRR=30-126"/>
</dbReference>
<dbReference type="PDB" id="8RBX">
    <property type="method" value="EM"/>
    <property type="resolution" value="4.10 A"/>
    <property type="chains" value="R/W=1-126"/>
</dbReference>
<dbReference type="PDB" id="8RGM">
    <property type="method" value="EM"/>
    <property type="resolution" value="4.00 A"/>
    <property type="chains" value="D/H=2-126"/>
</dbReference>
<dbReference type="PDB" id="8SMW">
    <property type="method" value="EM"/>
    <property type="resolution" value="3.30 A"/>
    <property type="chains" value="D/H=1-124"/>
</dbReference>
<dbReference type="PDB" id="8SMX">
    <property type="method" value="EM"/>
    <property type="resolution" value="3.20 A"/>
    <property type="chains" value="D/H=1-124"/>
</dbReference>
<dbReference type="PDB" id="8SMY">
    <property type="method" value="EM"/>
    <property type="resolution" value="3.20 A"/>
    <property type="chains" value="D/H=1-124"/>
</dbReference>
<dbReference type="PDB" id="8SMZ">
    <property type="method" value="EM"/>
    <property type="resolution" value="3.20 A"/>
    <property type="chains" value="D/H=1-124"/>
</dbReference>
<dbReference type="PDB" id="8SN0">
    <property type="method" value="EM"/>
    <property type="resolution" value="3.20 A"/>
    <property type="chains" value="D/H=1-124"/>
</dbReference>
<dbReference type="PDB" id="8SN1">
    <property type="method" value="EM"/>
    <property type="resolution" value="3.30 A"/>
    <property type="chains" value="D/H=1-124"/>
</dbReference>
<dbReference type="PDB" id="8SN2">
    <property type="method" value="EM"/>
    <property type="resolution" value="3.60 A"/>
    <property type="chains" value="D/H=1-124"/>
</dbReference>
<dbReference type="PDB" id="8SN3">
    <property type="method" value="EM"/>
    <property type="resolution" value="3.80 A"/>
    <property type="chains" value="D/H=1-124"/>
</dbReference>
<dbReference type="PDB" id="8SN4">
    <property type="method" value="EM"/>
    <property type="resolution" value="3.70 A"/>
    <property type="chains" value="D/H=1-124"/>
</dbReference>
<dbReference type="PDB" id="8SN5">
    <property type="method" value="EM"/>
    <property type="resolution" value="3.90 A"/>
    <property type="chains" value="D/H=1-124"/>
</dbReference>
<dbReference type="PDB" id="8SN6">
    <property type="method" value="EM"/>
    <property type="resolution" value="3.70 A"/>
    <property type="chains" value="D/H=1-124"/>
</dbReference>
<dbReference type="PDB" id="8SN7">
    <property type="method" value="EM"/>
    <property type="resolution" value="3.70 A"/>
    <property type="chains" value="D/H=1-124"/>
</dbReference>
<dbReference type="PDB" id="8SN8">
    <property type="method" value="EM"/>
    <property type="resolution" value="3.70 A"/>
    <property type="chains" value="D/H=1-124"/>
</dbReference>
<dbReference type="PDB" id="8SN9">
    <property type="method" value="EM"/>
    <property type="resolution" value="3.90 A"/>
    <property type="chains" value="D/H=1-124"/>
</dbReference>
<dbReference type="PDB" id="8SNA">
    <property type="method" value="EM"/>
    <property type="resolution" value="4.00 A"/>
    <property type="chains" value="D/H=1-124"/>
</dbReference>
<dbReference type="PDB" id="8U14">
    <property type="method" value="EM"/>
    <property type="resolution" value="3.90 A"/>
    <property type="chains" value="D/H=1-124"/>
</dbReference>
<dbReference type="PDB" id="8UPF">
    <property type="method" value="EM"/>
    <property type="resolution" value="3.20 A"/>
    <property type="chains" value="D/H=6-124"/>
</dbReference>
<dbReference type="PDB" id="8VFX">
    <property type="method" value="EM"/>
    <property type="resolution" value="2.65 A"/>
    <property type="chains" value="D/H=1-126"/>
</dbReference>
<dbReference type="PDB" id="8VFY">
    <property type="method" value="EM"/>
    <property type="resolution" value="2.89 A"/>
    <property type="chains" value="D/H=1-126"/>
</dbReference>
<dbReference type="PDB" id="8VFZ">
    <property type="method" value="EM"/>
    <property type="resolution" value="4.10 A"/>
    <property type="chains" value="D/H=1-126"/>
</dbReference>
<dbReference type="PDB" id="8VG0">
    <property type="method" value="EM"/>
    <property type="resolution" value="3.07 A"/>
    <property type="chains" value="D/H=1-126"/>
</dbReference>
<dbReference type="PDB" id="8VG1">
    <property type="method" value="EM"/>
    <property type="resolution" value="2.48 A"/>
    <property type="chains" value="D/H=1-126"/>
</dbReference>
<dbReference type="PDB" id="8VG2">
    <property type="method" value="EM"/>
    <property type="resolution" value="3.04 A"/>
    <property type="chains" value="D/H=1-126"/>
</dbReference>
<dbReference type="PDB" id="8XBT">
    <property type="method" value="EM"/>
    <property type="resolution" value="4.12 A"/>
    <property type="chains" value="D/H=1-126"/>
</dbReference>
<dbReference type="PDB" id="8XBU">
    <property type="method" value="EM"/>
    <property type="resolution" value="4.24 A"/>
    <property type="chains" value="D/H=1-126"/>
</dbReference>
<dbReference type="PDB" id="8Y3C">
    <property type="method" value="EM"/>
    <property type="resolution" value="5.21 A"/>
    <property type="chains" value="D/H/N=1-126"/>
</dbReference>
<dbReference type="PDB" id="8Y3D">
    <property type="method" value="EM"/>
    <property type="resolution" value="5.10 A"/>
    <property type="chains" value="D/H/N=1-126"/>
</dbReference>
<dbReference type="PDB" id="8Y3E">
    <property type="method" value="EM"/>
    <property type="resolution" value="5.32 A"/>
    <property type="chains" value="D/H/N=1-126"/>
</dbReference>
<dbReference type="PDB" id="8Y3F">
    <property type="method" value="EM"/>
    <property type="resolution" value="4.54 A"/>
    <property type="chains" value="D/H/N=1-126"/>
</dbReference>
<dbReference type="PDB" id="8YBJ">
    <property type="method" value="EM"/>
    <property type="resolution" value="2.38 A"/>
    <property type="chains" value="D/H=1-126"/>
</dbReference>
<dbReference type="PDB" id="8YBK">
    <property type="method" value="EM"/>
    <property type="resolution" value="2.69 A"/>
    <property type="chains" value="D/H=1-126"/>
</dbReference>
<dbReference type="PDB" id="8YNY">
    <property type="method" value="EM"/>
    <property type="resolution" value="4.52 A"/>
    <property type="chains" value="D/H=1-126"/>
</dbReference>
<dbReference type="PDB" id="8YTI">
    <property type="method" value="X-ray"/>
    <property type="resolution" value="2.70 A"/>
    <property type="chains" value="D/H/N/R=1-126"/>
</dbReference>
<dbReference type="PDB" id="9GMK">
    <property type="method" value="EM"/>
    <property type="resolution" value="3.50 A"/>
    <property type="chains" value="D/H=1-126"/>
</dbReference>
<dbReference type="PDB" id="9GMR">
    <property type="method" value="EM"/>
    <property type="resolution" value="2.80 A"/>
    <property type="chains" value="D/H=1-126"/>
</dbReference>
<dbReference type="PDB" id="9J0N">
    <property type="method" value="EM"/>
    <property type="resolution" value="3.40 A"/>
    <property type="chains" value="d/h=1-126"/>
</dbReference>
<dbReference type="PDB" id="9J0O">
    <property type="method" value="EM"/>
    <property type="resolution" value="3.30 A"/>
    <property type="chains" value="d/h=1-126"/>
</dbReference>
<dbReference type="PDB" id="9J0P">
    <property type="method" value="EM"/>
    <property type="resolution" value="3.30 A"/>
    <property type="chains" value="d/h=1-126"/>
</dbReference>
<dbReference type="PDB" id="9J8M">
    <property type="method" value="EM"/>
    <property type="resolution" value="3.82 A"/>
    <property type="chains" value="D/H=1-126"/>
</dbReference>
<dbReference type="PDB" id="9J8N">
    <property type="method" value="EM"/>
    <property type="resolution" value="7.14 A"/>
    <property type="chains" value="D/H/d/h=1-126"/>
</dbReference>
<dbReference type="PDB" id="9J8O">
    <property type="method" value="EM"/>
    <property type="resolution" value="4.05 A"/>
    <property type="chains" value="D/H/d/h=1-126"/>
</dbReference>
<dbReference type="PDBsum" id="2RVQ"/>
<dbReference type="PDBsum" id="3A6N"/>
<dbReference type="PDBsum" id="3AFA"/>
<dbReference type="PDBsum" id="3AN2"/>
<dbReference type="PDBsum" id="3AV1"/>
<dbReference type="PDBsum" id="3AV2"/>
<dbReference type="PDBsum" id="3AYW"/>
<dbReference type="PDBsum" id="3AZE"/>
<dbReference type="PDBsum" id="3AZF"/>
<dbReference type="PDBsum" id="3AZG"/>
<dbReference type="PDBsum" id="3AZH"/>
<dbReference type="PDBsum" id="3AZI"/>
<dbReference type="PDBsum" id="3AZJ"/>
<dbReference type="PDBsum" id="3AZK"/>
<dbReference type="PDBsum" id="3AZL"/>
<dbReference type="PDBsum" id="3AZM"/>
<dbReference type="PDBsum" id="3AZN"/>
<dbReference type="PDBsum" id="3W96"/>
<dbReference type="PDBsum" id="3W97"/>
<dbReference type="PDBsum" id="3W98"/>
<dbReference type="PDBsum" id="3W99"/>
<dbReference type="PDBsum" id="3WA9"/>
<dbReference type="PDBsum" id="3WAA"/>
<dbReference type="PDBsum" id="3WTP"/>
<dbReference type="PDBsum" id="4CAY"/>
<dbReference type="PDBsum" id="4YM5"/>
<dbReference type="PDBsum" id="4YM6"/>
<dbReference type="PDBsum" id="4Z5T"/>
<dbReference type="PDBsum" id="5AV5"/>
<dbReference type="PDBsum" id="5AV6"/>
<dbReference type="PDBsum" id="5AV8"/>
<dbReference type="PDBsum" id="5AV9"/>
<dbReference type="PDBsum" id="5AVB"/>
<dbReference type="PDBsum" id="5AVC"/>
<dbReference type="PDBsum" id="5AY8"/>
<dbReference type="PDBsum" id="5B0Y"/>
<dbReference type="PDBsum" id="5B0Z"/>
<dbReference type="PDBsum" id="5B24"/>
<dbReference type="PDBsum" id="5B2I"/>
<dbReference type="PDBsum" id="5B2J"/>
<dbReference type="PDBsum" id="5B31"/>
<dbReference type="PDBsum" id="5B32"/>
<dbReference type="PDBsum" id="5B33"/>
<dbReference type="PDBsum" id="5B40"/>
<dbReference type="PDBsum" id="5CPI"/>
<dbReference type="PDBsum" id="5CPJ"/>
<dbReference type="PDBsum" id="5CPK"/>
<dbReference type="PDBsum" id="5FUG"/>
<dbReference type="PDBsum" id="5GSE"/>
<dbReference type="PDBsum" id="5GTC"/>
<dbReference type="PDBsum" id="5GXQ"/>
<dbReference type="PDBsum" id="5JRG"/>
<dbReference type="PDBsum" id="5VEY"/>
<dbReference type="PDBsum" id="5X7X"/>
<dbReference type="PDBsum" id="5XF3"/>
<dbReference type="PDBsum" id="5XF4"/>
<dbReference type="PDBsum" id="5XF5"/>
<dbReference type="PDBsum" id="5Y0C"/>
<dbReference type="PDBsum" id="5Y0D"/>
<dbReference type="PDBsum" id="5Z23"/>
<dbReference type="PDBsum" id="5Z30"/>
<dbReference type="PDBsum" id="5ZBX"/>
<dbReference type="PDBsum" id="6A5L"/>
<dbReference type="PDBsum" id="6A5O"/>
<dbReference type="PDBsum" id="6A5P"/>
<dbReference type="PDBsum" id="6A5R"/>
<dbReference type="PDBsum" id="6A5T"/>
<dbReference type="PDBsum" id="6A5U"/>
<dbReference type="PDBsum" id="6BUZ"/>
<dbReference type="PDBsum" id="6E0C"/>
<dbReference type="PDBsum" id="6E0P"/>
<dbReference type="PDBsum" id="6HKT"/>
<dbReference type="PDBsum" id="6HTS"/>
<dbReference type="PDBsum" id="6INQ"/>
<dbReference type="PDBsum" id="6IPU"/>
<dbReference type="PDBsum" id="6IQ4"/>
<dbReference type="PDBsum" id="6IR9"/>
<dbReference type="PDBsum" id="6J4W"/>
<dbReference type="PDBsum" id="6J4X"/>
<dbReference type="PDBsum" id="6J4Y"/>
<dbReference type="PDBsum" id="6J4Z"/>
<dbReference type="PDBsum" id="6J50"/>
<dbReference type="PDBsum" id="6J51"/>
<dbReference type="PDBsum" id="6JOU"/>
<dbReference type="PDBsum" id="6JR0"/>
<dbReference type="PDBsum" id="6JR1"/>
<dbReference type="PDBsum" id="6JXD"/>
<dbReference type="PDBsum" id="6K1I"/>
<dbReference type="PDBsum" id="6K1J"/>
<dbReference type="PDBsum" id="6K1K"/>
<dbReference type="PDBsum" id="6KVD"/>
<dbReference type="PDBsum" id="6KXV"/>
<dbReference type="PDBsum" id="6L49"/>
<dbReference type="PDBsum" id="6L4A"/>
<dbReference type="PDBsum" id="6L9Z"/>
<dbReference type="PDBsum" id="6LA2"/>
<dbReference type="PDBsum" id="6LA8"/>
<dbReference type="PDBsum" id="6LA9"/>
<dbReference type="PDBsum" id="6LAB"/>
<dbReference type="PDBsum" id="6LER"/>
<dbReference type="PDBsum" id="6M3V"/>
<dbReference type="PDBsum" id="6M44"/>
<dbReference type="PDBsum" id="6O1D"/>
<dbReference type="PDBsum" id="6R8Y"/>
<dbReference type="PDBsum" id="6R8Z"/>
<dbReference type="PDBsum" id="6R90"/>
<dbReference type="PDBsum" id="6R91"/>
<dbReference type="PDBsum" id="6R92"/>
<dbReference type="PDBsum" id="6R93"/>
<dbReference type="PDBsum" id="6R94"/>
<dbReference type="PDBsum" id="6T90"/>
<dbReference type="PDBsum" id="6T93"/>
<dbReference type="PDBsum" id="6USJ"/>
<dbReference type="PDBsum" id="6V2K"/>
<dbReference type="PDBsum" id="6YOV"/>
<dbReference type="PDBsum" id="7BY0"/>
<dbReference type="PDBsum" id="7C0M"/>
<dbReference type="PDBsum" id="7CCQ"/>
<dbReference type="PDBsum" id="7CCR"/>
<dbReference type="PDBsum" id="7COW"/>
<dbReference type="PDBsum" id="7D1Z"/>
<dbReference type="PDBsum" id="7D20"/>
<dbReference type="PDBsum" id="7E8D"/>
<dbReference type="PDBsum" id="7K5X"/>
<dbReference type="PDBsum" id="7K5Y"/>
<dbReference type="PDBsum" id="7K60"/>
<dbReference type="PDBsum" id="7K61"/>
<dbReference type="PDBsum" id="7K63"/>
<dbReference type="PDBsum" id="7LYA"/>
<dbReference type="PDBsum" id="7LYB"/>
<dbReference type="PDBsum" id="7LYC"/>
<dbReference type="PDBsum" id="7NL0"/>
<dbReference type="PDBsum" id="7SCY"/>
<dbReference type="PDBsum" id="7SCZ"/>
<dbReference type="PDBsum" id="7VCL"/>
<dbReference type="PDBsum" id="7VZ4"/>
<dbReference type="PDBsum" id="7W9V"/>
<dbReference type="PDBsum" id="7WBV"/>
<dbReference type="PDBsum" id="7WBW"/>
<dbReference type="PDBsum" id="7WBX"/>
<dbReference type="PDBsum" id="7XSE"/>
<dbReference type="PDBsum" id="7XSX"/>
<dbReference type="PDBsum" id="7XSZ"/>
<dbReference type="PDBsum" id="7XT7"/>
<dbReference type="PDBsum" id="7XTD"/>
<dbReference type="PDBsum" id="7XTI"/>
<dbReference type="PDBsum" id="7XVL"/>
<dbReference type="PDBsum" id="7XVM"/>
<dbReference type="PDBsum" id="7XX5"/>
<dbReference type="PDBsum" id="7XX6"/>
<dbReference type="PDBsum" id="7XZX"/>
<dbReference type="PDBsum" id="7XZY"/>
<dbReference type="PDBsum" id="7XZZ"/>
<dbReference type="PDBsum" id="7Y00"/>
<dbReference type="PDBsum" id="7Y7I"/>
<dbReference type="PDBsum" id="7YRD"/>
<dbReference type="PDBsum" id="7ZI4"/>
<dbReference type="PDBsum" id="8G57"/>
<dbReference type="PDBsum" id="8GUI"/>
<dbReference type="PDBsum" id="8GUJ"/>
<dbReference type="PDBsum" id="8GUK"/>
<dbReference type="PDBsum" id="8H0V"/>
<dbReference type="PDBsum" id="8H0W"/>
<dbReference type="PDBsum" id="8HAG"/>
<dbReference type="PDBsum" id="8HAH"/>
<dbReference type="PDBsum" id="8HAI"/>
<dbReference type="PDBsum" id="8HAJ"/>
<dbReference type="PDBsum" id="8HAK"/>
<dbReference type="PDBsum" id="8HAL"/>
<dbReference type="PDBsum" id="8HAM"/>
<dbReference type="PDBsum" id="8HAN"/>
<dbReference type="PDBsum" id="8HE5"/>
<dbReference type="PDBsum" id="8I17"/>
<dbReference type="PDBsum" id="8IHL"/>
<dbReference type="PDBsum" id="8JH2"/>
<dbReference type="PDBsum" id="8JH3"/>
<dbReference type="PDBsum" id="8JH4"/>
<dbReference type="PDBsum" id="8JL9"/>
<dbReference type="PDBsum" id="8JLA"/>
<dbReference type="PDBsum" id="8JLB"/>
<dbReference type="PDBsum" id="8JLD"/>
<dbReference type="PDBsum" id="8JND"/>
<dbReference type="PDBsum" id="8JNE"/>
<dbReference type="PDBsum" id="8JNF"/>
<dbReference type="PDBsum" id="8KB5"/>
<dbReference type="PDBsum" id="8KCY"/>
<dbReference type="PDBsum" id="8KD1"/>
<dbReference type="PDBsum" id="8KE0"/>
<dbReference type="PDBsum" id="8OSJ"/>
<dbReference type="PDBsum" id="8OSK"/>
<dbReference type="PDBsum" id="8OSL"/>
<dbReference type="PDBsum" id="8OTS"/>
<dbReference type="PDBsum" id="8OTT"/>
<dbReference type="PDBsum" id="8QKT"/>
<dbReference type="PDBsum" id="8RBX"/>
<dbReference type="PDBsum" id="8RGM"/>
<dbReference type="PDBsum" id="8SMW"/>
<dbReference type="PDBsum" id="8SMX"/>
<dbReference type="PDBsum" id="8SMY"/>
<dbReference type="PDBsum" id="8SMZ"/>
<dbReference type="PDBsum" id="8SN0"/>
<dbReference type="PDBsum" id="8SN1"/>
<dbReference type="PDBsum" id="8SN2"/>
<dbReference type="PDBsum" id="8SN3"/>
<dbReference type="PDBsum" id="8SN4"/>
<dbReference type="PDBsum" id="8SN5"/>
<dbReference type="PDBsum" id="8SN6"/>
<dbReference type="PDBsum" id="8SN7"/>
<dbReference type="PDBsum" id="8SN8"/>
<dbReference type="PDBsum" id="8SN9"/>
<dbReference type="PDBsum" id="8SNA"/>
<dbReference type="PDBsum" id="8U14"/>
<dbReference type="PDBsum" id="8UPF"/>
<dbReference type="PDBsum" id="8VFX"/>
<dbReference type="PDBsum" id="8VFY"/>
<dbReference type="PDBsum" id="8VFZ"/>
<dbReference type="PDBsum" id="8VG0"/>
<dbReference type="PDBsum" id="8VG1"/>
<dbReference type="PDBsum" id="8VG2"/>
<dbReference type="PDBsum" id="8XBT"/>
<dbReference type="PDBsum" id="8XBU"/>
<dbReference type="PDBsum" id="8Y3C"/>
<dbReference type="PDBsum" id="8Y3D"/>
<dbReference type="PDBsum" id="8Y3E"/>
<dbReference type="PDBsum" id="8Y3F"/>
<dbReference type="PDBsum" id="8YBJ"/>
<dbReference type="PDBsum" id="8YBK"/>
<dbReference type="PDBsum" id="8YNY"/>
<dbReference type="PDBsum" id="8YTI"/>
<dbReference type="PDBsum" id="9GMK"/>
<dbReference type="PDBsum" id="9GMR"/>
<dbReference type="PDBsum" id="9J0N"/>
<dbReference type="PDBsum" id="9J0O"/>
<dbReference type="PDBsum" id="9J0P"/>
<dbReference type="PDBsum" id="9J8M"/>
<dbReference type="PDBsum" id="9J8N"/>
<dbReference type="PDBsum" id="9J8O"/>
<dbReference type="EMDB" id="EMD-0586"/>
<dbReference type="EMDB" id="EMD-0671"/>
<dbReference type="EMDB" id="EMD-0672"/>
<dbReference type="EMDB" id="EMD-0673"/>
<dbReference type="EMDB" id="EMD-0674"/>
<dbReference type="EMDB" id="EMD-0675"/>
<dbReference type="EMDB" id="EMD-0676"/>
<dbReference type="EMDB" id="EMD-10406"/>
<dbReference type="EMDB" id="EMD-10408"/>
<dbReference type="EMDB" id="EMD-10864"/>
<dbReference type="EMDB" id="EMD-12453"/>
<dbReference type="EMDB" id="EMD-14737"/>
<dbReference type="EMDB" id="EMD-17155"/>
<dbReference type="EMDB" id="EMD-17157"/>
<dbReference type="EMDB" id="EMD-17160"/>
<dbReference type="EMDB" id="EMD-17183"/>
<dbReference type="EMDB" id="EMD-17184"/>
<dbReference type="EMDB" id="EMD-19038"/>
<dbReference type="EMDB" id="EMD-19134"/>
<dbReference type="EMDB" id="EMD-20864"/>
<dbReference type="EMDB" id="EMD-22683"/>
<dbReference type="EMDB" id="EMD-22684"/>
<dbReference type="EMDB" id="EMD-22685"/>
<dbReference type="EMDB" id="EMD-22686"/>
<dbReference type="EMDB" id="EMD-22687"/>
<dbReference type="EMDB" id="EMD-22688"/>
<dbReference type="EMDB" id="EMD-23590"/>
<dbReference type="EMDB" id="EMD-23591"/>
<dbReference type="EMDB" id="EMD-23592"/>
<dbReference type="EMDB" id="EMD-25042"/>
<dbReference type="EMDB" id="EMD-25043"/>
<dbReference type="EMDB" id="EMD-29735"/>
<dbReference type="EMDB" id="EMD-30239"/>
<dbReference type="EMDB" id="EMD-30267"/>
<dbReference type="EMDB" id="EMD-30339"/>
<dbReference type="EMDB" id="EMD-30340"/>
<dbReference type="EMDB" id="EMD-30551"/>
<dbReference type="EMDB" id="EMD-30552"/>
<dbReference type="EMDB" id="EMD-31015"/>
<dbReference type="EMDB" id="EMD-32220"/>
<dbReference type="EMDB" id="EMD-32373"/>
<dbReference type="EMDB" id="EMD-32407"/>
<dbReference type="EMDB" id="EMD-32408"/>
<dbReference type="EMDB" id="EMD-32409"/>
<dbReference type="EMDB" id="EMD-33424"/>
<dbReference type="EMDB" id="EMD-33436"/>
<dbReference type="EMDB" id="EMD-33437"/>
<dbReference type="EMDB" id="EMD-33441"/>
<dbReference type="EMDB" id="EMD-33447"/>
<dbReference type="EMDB" id="EMD-33450"/>
<dbReference type="EMDB" id="EMD-33533"/>
<dbReference type="EMDB" id="EMD-33534"/>
<dbReference type="EMDB" id="EMD-33535"/>
<dbReference type="EMDB" id="EMD-33536"/>
<dbReference type="EMDB" id="EMD-33666"/>
<dbReference type="EMDB" id="EMD-34274"/>
<dbReference type="EMDB" id="EMD-34275"/>
<dbReference type="EMDB" id="EMD-34415"/>
<dbReference type="EMDB" id="EMD-34416"/>
<dbReference type="EMDB" id="EMD-34588"/>
<dbReference type="EMDB" id="EMD-34589"/>
<dbReference type="EMDB" id="EMD-34591"/>
<dbReference type="EMDB" id="EMD-34592"/>
<dbReference type="EMDB" id="EMD-34594"/>
<dbReference type="EMDB" id="EMD-34595"/>
<dbReference type="EMDB" id="EMD-34596"/>
<dbReference type="EMDB" id="EMD-34597"/>
<dbReference type="EMDB" id="EMD-34685"/>
<dbReference type="EMDB" id="EMD-35448"/>
<dbReference type="EMDB" id="EMD-36251"/>
<dbReference type="EMDB" id="EMD-36252"/>
<dbReference type="EMDB" id="EMD-36253"/>
<dbReference type="EMDB" id="EMD-36389"/>
<dbReference type="EMDB" id="EMD-36390"/>
<dbReference type="EMDB" id="EMD-36391"/>
<dbReference type="EMDB" id="EMD-36393"/>
<dbReference type="EMDB" id="EMD-36442"/>
<dbReference type="EMDB" id="EMD-36443"/>
<dbReference type="EMDB" id="EMD-36444"/>
<dbReference type="EMDB" id="EMD-37070"/>
<dbReference type="EMDB" id="EMD-37115"/>
<dbReference type="EMDB" id="EMD-37121"/>
<dbReference type="EMDB" id="EMD-37149"/>
<dbReference type="EMDB" id="EMD-38228"/>
<dbReference type="EMDB" id="EMD-38229"/>
<dbReference type="EMDB" id="EMD-38877"/>
<dbReference type="EMDB" id="EMD-38878"/>
<dbReference type="EMDB" id="EMD-38879"/>
<dbReference type="EMDB" id="EMD-38880"/>
<dbReference type="EMDB" id="EMD-39119"/>
<dbReference type="EMDB" id="EMD-39120"/>
<dbReference type="EMDB" id="EMD-39431"/>
<dbReference type="EMDB" id="EMD-3954"/>
<dbReference type="EMDB" id="EMD-40604"/>
<dbReference type="EMDB" id="EMD-40605"/>
<dbReference type="EMDB" id="EMD-40606"/>
<dbReference type="EMDB" id="EMD-40607"/>
<dbReference type="EMDB" id="EMD-40608"/>
<dbReference type="EMDB" id="EMD-40609"/>
<dbReference type="EMDB" id="EMD-40610"/>
<dbReference type="EMDB" id="EMD-40611"/>
<dbReference type="EMDB" id="EMD-40612"/>
<dbReference type="EMDB" id="EMD-40613"/>
<dbReference type="EMDB" id="EMD-40614"/>
<dbReference type="EMDB" id="EMD-40615"/>
<dbReference type="EMDB" id="EMD-40616"/>
<dbReference type="EMDB" id="EMD-40617"/>
<dbReference type="EMDB" id="EMD-40618"/>
<dbReference type="EMDB" id="EMD-41801"/>
<dbReference type="EMDB" id="EMD-42446"/>
<dbReference type="EMDB" id="EMD-43193"/>
<dbReference type="EMDB" id="EMD-43194"/>
<dbReference type="EMDB" id="EMD-43195"/>
<dbReference type="EMDB" id="EMD-43196"/>
<dbReference type="EMDB" id="EMD-43197"/>
<dbReference type="EMDB" id="EMD-43198"/>
<dbReference type="EMDB" id="EMD-4711"/>
<dbReference type="EMDB" id="EMD-4762"/>
<dbReference type="EMDB" id="EMD-4763"/>
<dbReference type="EMDB" id="EMD-4764"/>
<dbReference type="EMDB" id="EMD-4765"/>
<dbReference type="EMDB" id="EMD-4766"/>
<dbReference type="EMDB" id="EMD-4767"/>
<dbReference type="EMDB" id="EMD-4768"/>
<dbReference type="EMDB" id="EMD-51449"/>
<dbReference type="EMDB" id="EMD-51453"/>
<dbReference type="EMDB" id="EMD-61058"/>
<dbReference type="EMDB" id="EMD-61059"/>
<dbReference type="EMDB" id="EMD-61060"/>
<dbReference type="EMDB" id="EMD-61231"/>
<dbReference type="EMDB" id="EMD-61232"/>
<dbReference type="EMDB" id="EMD-61233"/>
<dbReference type="EMDB" id="EMD-6980"/>
<dbReference type="EMDB" id="EMD-6981"/>
<dbReference type="EMDB" id="EMD-6982"/>
<dbReference type="EMDB" id="EMD-6983"/>
<dbReference type="EMDB" id="EMD-6984"/>
<dbReference type="EMDB" id="EMD-6985"/>
<dbReference type="EMDB" id="EMD-6986"/>
<dbReference type="EMDB" id="EMD-7293"/>
<dbReference type="EMDB" id="EMD-7318"/>
<dbReference type="EMDB" id="EMD-8945"/>
<dbReference type="EMDB" id="EMD-8949"/>
<dbReference type="EMDB" id="EMD-9713"/>
<dbReference type="SMR" id="P06899"/>
<dbReference type="BioGRID" id="114460">
    <property type="interactions" value="197"/>
</dbReference>
<dbReference type="ComplexPortal" id="CPX-2556">
    <property type="entry name" value="Nucleosome, variant H3.1-H2A.2-H2B.1"/>
</dbReference>
<dbReference type="ComplexPortal" id="CPX-2564">
    <property type="entry name" value="Nucleosome, variant H3.1t-H2A.2-H2B.1"/>
</dbReference>
<dbReference type="ComplexPortal" id="CPX-25754">
    <property type="entry name" value="Nucleosome complex, H2A type 1 variant"/>
</dbReference>
<dbReference type="ComplexPortal" id="CPX-5647">
    <property type="entry name" value="CENP-A nucleosome complex"/>
</dbReference>
<dbReference type="ComplexPortal" id="CPX-5668">
    <property type="entry name" value="Nucleosome, variant H3.2-H2A.2-H2B.1"/>
</dbReference>
<dbReference type="ComplexPortal" id="CPX-5670">
    <property type="entry name" value="Nucleosome, variant H3.1-H2A.Z-H2B.1"/>
</dbReference>
<dbReference type="ComplexPortal" id="CPX-5671">
    <property type="entry name" value="Nucleosome, variant H3.1-H2A.V-H2B.1"/>
</dbReference>
<dbReference type="DIP" id="DIP-421N"/>
<dbReference type="FunCoup" id="P06899">
    <property type="interactions" value="822"/>
</dbReference>
<dbReference type="IntAct" id="P06899">
    <property type="interactions" value="49"/>
</dbReference>
<dbReference type="MINT" id="P06899"/>
<dbReference type="STRING" id="9606.ENSP00000476136"/>
<dbReference type="GlyCosmos" id="P06899">
    <property type="glycosylation" value="1 site, No reported glycans"/>
</dbReference>
<dbReference type="GlyGen" id="P06899">
    <property type="glycosylation" value="2 sites, 1 O-linked glycan (1 site)"/>
</dbReference>
<dbReference type="iPTMnet" id="P06899"/>
<dbReference type="PhosphoSitePlus" id="P06899"/>
<dbReference type="SwissPalm" id="P06899"/>
<dbReference type="BioMuta" id="HIST1H2BJ"/>
<dbReference type="DMDM" id="7404367"/>
<dbReference type="jPOST" id="P06899"/>
<dbReference type="MassIVE" id="P06899"/>
<dbReference type="PaxDb" id="9606-ENSP00000476136"/>
<dbReference type="PeptideAtlas" id="P06899"/>
<dbReference type="PRIDE" id="P06899"/>
<dbReference type="Pumba" id="P06899"/>
<dbReference type="TopDownProteomics" id="P06899"/>
<dbReference type="ABCD" id="P06899">
    <property type="antibodies" value="1 sequenced antibody"/>
</dbReference>
<dbReference type="Antibodypedia" id="58726">
    <property type="antibodies" value="204 antibodies from 15 providers"/>
</dbReference>
<dbReference type="DNASU" id="8970"/>
<dbReference type="Ensembl" id="ENST00000339812.3">
    <property type="protein sequence ID" value="ENSP00000342886.3"/>
    <property type="gene ID" value="ENSG00000124635.10"/>
</dbReference>
<dbReference type="Ensembl" id="ENST00000607124.2">
    <property type="protein sequence ID" value="ENSP00000476136.1"/>
    <property type="gene ID" value="ENSG00000124635.10"/>
</dbReference>
<dbReference type="GeneID" id="8970"/>
<dbReference type="KEGG" id="hsa:8970"/>
<dbReference type="MANE-Select" id="ENST00000339812.3">
    <property type="protein sequence ID" value="ENSP00000342886.3"/>
    <property type="RefSeq nucleotide sequence ID" value="NM_021058.4"/>
    <property type="RefSeq protein sequence ID" value="NP_066402.2"/>
</dbReference>
<dbReference type="UCSC" id="uc003niv.4">
    <property type="organism name" value="human"/>
</dbReference>
<dbReference type="AGR" id="HGNC:4761"/>
<dbReference type="CTD" id="8970"/>
<dbReference type="DisGeNET" id="8970"/>
<dbReference type="GeneCards" id="H2BC11"/>
<dbReference type="HGNC" id="HGNC:4761">
    <property type="gene designation" value="H2BC11"/>
</dbReference>
<dbReference type="HPA" id="ENSG00000124635">
    <property type="expression patterns" value="Tissue enhanced (testis)"/>
</dbReference>
<dbReference type="MalaCards" id="H2BC11"/>
<dbReference type="MIM" id="615044">
    <property type="type" value="gene"/>
</dbReference>
<dbReference type="neXtProt" id="NX_P06899"/>
<dbReference type="OpenTargets" id="ENSG00000124635"/>
<dbReference type="VEuPathDB" id="HostDB:ENSG00000124635"/>
<dbReference type="eggNOG" id="KOG1744">
    <property type="taxonomic scope" value="Eukaryota"/>
</dbReference>
<dbReference type="GeneTree" id="ENSGT01110000267152"/>
<dbReference type="HOGENOM" id="CLU_075666_2_1_1"/>
<dbReference type="InParanoid" id="P06899"/>
<dbReference type="OMA" id="HYNKPST"/>
<dbReference type="OrthoDB" id="9537006at2759"/>
<dbReference type="PAN-GO" id="P06899">
    <property type="GO annotations" value="2 GO annotations based on evolutionary models"/>
</dbReference>
<dbReference type="PhylomeDB" id="P06899"/>
<dbReference type="TreeFam" id="TF300212"/>
<dbReference type="PathwayCommons" id="P06899"/>
<dbReference type="Reactome" id="R-HSA-110328">
    <property type="pathway name" value="Recognition and association of DNA glycosylase with site containing an affected pyrimidine"/>
</dbReference>
<dbReference type="Reactome" id="R-HSA-110329">
    <property type="pathway name" value="Cleavage of the damaged pyrimidine"/>
</dbReference>
<dbReference type="Reactome" id="R-HSA-110330">
    <property type="pathway name" value="Recognition and association of DNA glycosylase with site containing an affected purine"/>
</dbReference>
<dbReference type="Reactome" id="R-HSA-110331">
    <property type="pathway name" value="Cleavage of the damaged purine"/>
</dbReference>
<dbReference type="Reactome" id="R-HSA-1221632">
    <property type="pathway name" value="Meiotic synapsis"/>
</dbReference>
<dbReference type="Reactome" id="R-HSA-171306">
    <property type="pathway name" value="Packaging Of Telomere Ends"/>
</dbReference>
<dbReference type="Reactome" id="R-HSA-1912408">
    <property type="pathway name" value="Pre-NOTCH Transcription and Translation"/>
</dbReference>
<dbReference type="Reactome" id="R-HSA-201722">
    <property type="pathway name" value="Formation of the beta-catenin:TCF transactivating complex"/>
</dbReference>
<dbReference type="Reactome" id="R-HSA-212300">
    <property type="pathway name" value="PRC2 methylates histones and DNA"/>
</dbReference>
<dbReference type="Reactome" id="R-HSA-2299718">
    <property type="pathway name" value="Condensation of Prophase Chromosomes"/>
</dbReference>
<dbReference type="Reactome" id="R-HSA-2559580">
    <property type="pathway name" value="Oxidative Stress Induced Senescence"/>
</dbReference>
<dbReference type="Reactome" id="R-HSA-2559582">
    <property type="pathway name" value="Senescence-Associated Secretory Phenotype (SASP)"/>
</dbReference>
<dbReference type="Reactome" id="R-HSA-2559586">
    <property type="pathway name" value="DNA Damage/Telomere Stress Induced Senescence"/>
</dbReference>
<dbReference type="Reactome" id="R-HSA-3214815">
    <property type="pathway name" value="HDACs deacetylate histones"/>
</dbReference>
<dbReference type="Reactome" id="R-HSA-3214847">
    <property type="pathway name" value="HATs acetylate histones"/>
</dbReference>
<dbReference type="Reactome" id="R-HSA-427359">
    <property type="pathway name" value="SIRT1 negatively regulates rRNA expression"/>
</dbReference>
<dbReference type="Reactome" id="R-HSA-427389">
    <property type="pathway name" value="ERCC6 (CSB) and EHMT2 (G9a) positively regulate rRNA expression"/>
</dbReference>
<dbReference type="Reactome" id="R-HSA-427413">
    <property type="pathway name" value="NoRC negatively regulates rRNA expression"/>
</dbReference>
<dbReference type="Reactome" id="R-HSA-5250924">
    <property type="pathway name" value="B-WICH complex positively regulates rRNA expression"/>
</dbReference>
<dbReference type="Reactome" id="R-HSA-5334118">
    <property type="pathway name" value="DNA methylation"/>
</dbReference>
<dbReference type="Reactome" id="R-HSA-5578749">
    <property type="pathway name" value="Transcriptional regulation by small RNAs"/>
</dbReference>
<dbReference type="Reactome" id="R-HSA-5617472">
    <property type="pathway name" value="Activation of anterior HOX genes in hindbrain development during early embryogenesis"/>
</dbReference>
<dbReference type="Reactome" id="R-HSA-5625886">
    <property type="pathway name" value="Activated PKN1 stimulates transcription of AR (androgen receptor) regulated genes KLK2 and KLK3"/>
</dbReference>
<dbReference type="Reactome" id="R-HSA-5689880">
    <property type="pathway name" value="Ub-specific processing proteases"/>
</dbReference>
<dbReference type="Reactome" id="R-HSA-5693565">
    <property type="pathway name" value="Recruitment and ATM-mediated phosphorylation of repair and signaling proteins at DNA double strand breaks"/>
</dbReference>
<dbReference type="Reactome" id="R-HSA-5693571">
    <property type="pathway name" value="Nonhomologous End-Joining (NHEJ)"/>
</dbReference>
<dbReference type="Reactome" id="R-HSA-5693607">
    <property type="pathway name" value="Processing of DNA double-strand break ends"/>
</dbReference>
<dbReference type="Reactome" id="R-HSA-606279">
    <property type="pathway name" value="Deposition of new CENPA-containing nucleosomes at the centromere"/>
</dbReference>
<dbReference type="Reactome" id="R-HSA-68616">
    <property type="pathway name" value="Assembly of the ORC complex at the origin of replication"/>
</dbReference>
<dbReference type="Reactome" id="R-HSA-69473">
    <property type="pathway name" value="G2/M DNA damage checkpoint"/>
</dbReference>
<dbReference type="Reactome" id="R-HSA-73728">
    <property type="pathway name" value="RNA Polymerase I Promoter Opening"/>
</dbReference>
<dbReference type="Reactome" id="R-HSA-73772">
    <property type="pathway name" value="RNA Polymerase I Promoter Escape"/>
</dbReference>
<dbReference type="Reactome" id="R-HSA-8866654">
    <property type="pathway name" value="E3 ubiquitin ligases ubiquitinate target proteins"/>
</dbReference>
<dbReference type="Reactome" id="R-HSA-8936459">
    <property type="pathway name" value="RUNX1 regulates genes involved in megakaryocyte differentiation and platelet function"/>
</dbReference>
<dbReference type="Reactome" id="R-HSA-8939236">
    <property type="pathway name" value="RUNX1 regulates transcription of genes involved in differentiation of HSCs"/>
</dbReference>
<dbReference type="Reactome" id="R-HSA-9018519">
    <property type="pathway name" value="Estrogen-dependent gene expression"/>
</dbReference>
<dbReference type="Reactome" id="R-HSA-912446">
    <property type="pathway name" value="Meiotic recombination"/>
</dbReference>
<dbReference type="Reactome" id="R-HSA-9609690">
    <property type="pathway name" value="HCMV Early Events"/>
</dbReference>
<dbReference type="Reactome" id="R-HSA-9610379">
    <property type="pathway name" value="HCMV Late Events"/>
</dbReference>
<dbReference type="Reactome" id="R-HSA-9616222">
    <property type="pathway name" value="Transcriptional regulation of granulopoiesis"/>
</dbReference>
<dbReference type="Reactome" id="R-HSA-9670095">
    <property type="pathway name" value="Inhibition of DNA recombination at telomere"/>
</dbReference>
<dbReference type="Reactome" id="R-HSA-9710421">
    <property type="pathway name" value="Defective pyroptosis"/>
</dbReference>
<dbReference type="Reactome" id="R-HSA-977225">
    <property type="pathway name" value="Amyloid fiber formation"/>
</dbReference>
<dbReference type="Reactome" id="R-HSA-9821002">
    <property type="pathway name" value="Chromatin modifications during the maternal to zygotic transition (MZT)"/>
</dbReference>
<dbReference type="Reactome" id="R-HSA-9821993">
    <property type="pathway name" value="Replacement of protamines by nucleosomes in the male pronucleus"/>
</dbReference>
<dbReference type="Reactome" id="R-HSA-9841922">
    <property type="pathway name" value="MLL4 and MLL3 complexes regulate expression of PPARG target genes in adipogenesis and hepatic steatosis"/>
</dbReference>
<dbReference type="Reactome" id="R-HSA-9843940">
    <property type="pathway name" value="Regulation of endogenous retroelements by KRAB-ZFP proteins"/>
</dbReference>
<dbReference type="Reactome" id="R-HSA-9843970">
    <property type="pathway name" value="Regulation of endogenous retroelements by the Human Silencing Hub (HUSH) complex"/>
</dbReference>
<dbReference type="Reactome" id="R-HSA-9845323">
    <property type="pathway name" value="Regulation of endogenous retroelements by Piwi-interacting RNAs (piRNAs)"/>
</dbReference>
<dbReference type="SignaLink" id="P06899"/>
<dbReference type="SIGNOR" id="P06899"/>
<dbReference type="BioGRID-ORCS" id="8970">
    <property type="hits" value="668 hits in 1090 CRISPR screens"/>
</dbReference>
<dbReference type="EvolutionaryTrace" id="P06899"/>
<dbReference type="GeneWiki" id="HIST1H2BJ"/>
<dbReference type="GenomeRNAi" id="8970"/>
<dbReference type="Pharos" id="P06899">
    <property type="development level" value="Tbio"/>
</dbReference>
<dbReference type="PRO" id="PR:P06899"/>
<dbReference type="Proteomes" id="UP000005640">
    <property type="component" value="Chromosome 6"/>
</dbReference>
<dbReference type="RNAct" id="P06899">
    <property type="molecule type" value="protein"/>
</dbReference>
<dbReference type="Bgee" id="ENSG00000124635">
    <property type="expression patterns" value="Expressed in bone marrow cell and 105 other cell types or tissues"/>
</dbReference>
<dbReference type="ExpressionAtlas" id="P06899">
    <property type="expression patterns" value="baseline and differential"/>
</dbReference>
<dbReference type="GO" id="GO:0043505">
    <property type="term" value="C:CENP-A containing nucleosome"/>
    <property type="evidence" value="ECO:0000353"/>
    <property type="project" value="ComplexPortal"/>
</dbReference>
<dbReference type="GO" id="GO:0005829">
    <property type="term" value="C:cytosol"/>
    <property type="evidence" value="ECO:0000314"/>
    <property type="project" value="HPA"/>
</dbReference>
<dbReference type="GO" id="GO:0005615">
    <property type="term" value="C:extracellular space"/>
    <property type="evidence" value="ECO:0000314"/>
    <property type="project" value="UniProtKB"/>
</dbReference>
<dbReference type="GO" id="GO:0005654">
    <property type="term" value="C:nucleoplasm"/>
    <property type="evidence" value="ECO:0000314"/>
    <property type="project" value="HPA"/>
</dbReference>
<dbReference type="GO" id="GO:0000786">
    <property type="term" value="C:nucleosome"/>
    <property type="evidence" value="ECO:0000353"/>
    <property type="project" value="ComplexPortal"/>
</dbReference>
<dbReference type="GO" id="GO:0005634">
    <property type="term" value="C:nucleus"/>
    <property type="evidence" value="ECO:0000314"/>
    <property type="project" value="UniProtKB"/>
</dbReference>
<dbReference type="GO" id="GO:0003677">
    <property type="term" value="F:DNA binding"/>
    <property type="evidence" value="ECO:0000303"/>
    <property type="project" value="UniProtKB"/>
</dbReference>
<dbReference type="GO" id="GO:0001530">
    <property type="term" value="F:lipopolysaccharide binding"/>
    <property type="evidence" value="ECO:0000314"/>
    <property type="project" value="UniProtKB"/>
</dbReference>
<dbReference type="GO" id="GO:0046982">
    <property type="term" value="F:protein heterodimerization activity"/>
    <property type="evidence" value="ECO:0007669"/>
    <property type="project" value="InterPro"/>
</dbReference>
<dbReference type="GO" id="GO:0030527">
    <property type="term" value="F:structural constituent of chromatin"/>
    <property type="evidence" value="ECO:0007669"/>
    <property type="project" value="InterPro"/>
</dbReference>
<dbReference type="GO" id="GO:0019731">
    <property type="term" value="P:antibacterial humoral response"/>
    <property type="evidence" value="ECO:0000314"/>
    <property type="project" value="UniProtKB"/>
</dbReference>
<dbReference type="GO" id="GO:0061844">
    <property type="term" value="P:antimicrobial humoral immune response mediated by antimicrobial peptide"/>
    <property type="evidence" value="ECO:0000314"/>
    <property type="project" value="UniProtKB"/>
</dbReference>
<dbReference type="GO" id="GO:0006325">
    <property type="term" value="P:chromatin organization"/>
    <property type="evidence" value="ECO:0000303"/>
    <property type="project" value="ComplexPortal"/>
</dbReference>
<dbReference type="GO" id="GO:0050829">
    <property type="term" value="P:defense response to Gram-negative bacterium"/>
    <property type="evidence" value="ECO:0000314"/>
    <property type="project" value="UniProtKB"/>
</dbReference>
<dbReference type="GO" id="GO:0050830">
    <property type="term" value="P:defense response to Gram-positive bacterium"/>
    <property type="evidence" value="ECO:0000314"/>
    <property type="project" value="UniProtKB"/>
</dbReference>
<dbReference type="GO" id="GO:0002227">
    <property type="term" value="P:innate immune response in mucosa"/>
    <property type="evidence" value="ECO:0000314"/>
    <property type="project" value="UniProtKB"/>
</dbReference>
<dbReference type="GO" id="GO:0031640">
    <property type="term" value="P:killing of cells of another organism"/>
    <property type="evidence" value="ECO:0000314"/>
    <property type="project" value="UniProtKB"/>
</dbReference>
<dbReference type="GO" id="GO:0010804">
    <property type="term" value="P:negative regulation of tumor necrosis factor-mediated signaling pathway"/>
    <property type="evidence" value="ECO:0000314"/>
    <property type="project" value="UniProtKB"/>
</dbReference>
<dbReference type="GO" id="GO:0006334">
    <property type="term" value="P:nucleosome assembly"/>
    <property type="evidence" value="ECO:0000303"/>
    <property type="project" value="UniProtKB"/>
</dbReference>
<dbReference type="GO" id="GO:0061644">
    <property type="term" value="P:protein localization to CENP-A containing chromatin"/>
    <property type="evidence" value="ECO:0000303"/>
    <property type="project" value="ComplexPortal"/>
</dbReference>
<dbReference type="CDD" id="cd22910">
    <property type="entry name" value="HFD_H2B"/>
    <property type="match status" value="1"/>
</dbReference>
<dbReference type="DisProt" id="DP01158"/>
<dbReference type="FunFam" id="1.10.20.10:FF:000003">
    <property type="entry name" value="Histone H2B"/>
    <property type="match status" value="1"/>
</dbReference>
<dbReference type="Gene3D" id="1.10.20.10">
    <property type="entry name" value="Histone, subunit A"/>
    <property type="match status" value="1"/>
</dbReference>
<dbReference type="InterPro" id="IPR009072">
    <property type="entry name" value="Histone-fold"/>
</dbReference>
<dbReference type="InterPro" id="IPR007125">
    <property type="entry name" value="Histone_H2A/H2B/H3"/>
</dbReference>
<dbReference type="InterPro" id="IPR000558">
    <property type="entry name" value="Histone_H2B"/>
</dbReference>
<dbReference type="InterPro" id="IPR055333">
    <property type="entry name" value="HISTONE_H2B_site"/>
</dbReference>
<dbReference type="PANTHER" id="PTHR23428">
    <property type="entry name" value="HISTONE H2B"/>
    <property type="match status" value="1"/>
</dbReference>
<dbReference type="Pfam" id="PF00125">
    <property type="entry name" value="Histone"/>
    <property type="match status" value="1"/>
</dbReference>
<dbReference type="PRINTS" id="PR00621">
    <property type="entry name" value="HISTONEH2B"/>
</dbReference>
<dbReference type="SMART" id="SM00427">
    <property type="entry name" value="H2B"/>
    <property type="match status" value="1"/>
</dbReference>
<dbReference type="SUPFAM" id="SSF47113">
    <property type="entry name" value="Histone-fold"/>
    <property type="match status" value="1"/>
</dbReference>
<dbReference type="PROSITE" id="PS00357">
    <property type="entry name" value="HISTONE_H2B"/>
    <property type="match status" value="1"/>
</dbReference>